<organism>
    <name type="scientific">Homo sapiens</name>
    <name type="common">Human</name>
    <dbReference type="NCBI Taxonomy" id="9606"/>
    <lineage>
        <taxon>Eukaryota</taxon>
        <taxon>Metazoa</taxon>
        <taxon>Chordata</taxon>
        <taxon>Craniata</taxon>
        <taxon>Vertebrata</taxon>
        <taxon>Euteleostomi</taxon>
        <taxon>Mammalia</taxon>
        <taxon>Eutheria</taxon>
        <taxon>Euarchontoglires</taxon>
        <taxon>Primates</taxon>
        <taxon>Haplorrhini</taxon>
        <taxon>Catarrhini</taxon>
        <taxon>Hominidae</taxon>
        <taxon>Homo</taxon>
    </lineage>
</organism>
<protein>
    <recommendedName>
        <fullName>Ribosomal protein S6 kinase beta-1</fullName>
        <shortName>S6K-beta-1</shortName>
        <shortName evidence="42">S6K1</shortName>
        <ecNumber evidence="14 21 23 24 33">2.7.11.1</ecNumber>
    </recommendedName>
    <alternativeName>
        <fullName>70 kDa ribosomal protein S6 kinase 1</fullName>
        <shortName>P70S6K1</shortName>
        <shortName>p70-S6K 1</shortName>
    </alternativeName>
    <alternativeName>
        <fullName>Ribosomal protein S6 kinase I</fullName>
    </alternativeName>
    <alternativeName>
        <fullName>Serine/threonine-protein kinase 14A</fullName>
    </alternativeName>
    <alternativeName>
        <fullName>p70 ribosomal S6 kinase alpha</fullName>
        <shortName>p70 S6 kinase alpha</shortName>
        <shortName>p70 S6K-alpha</shortName>
        <shortName>p70 S6KA</shortName>
    </alternativeName>
</protein>
<accession>P23443</accession>
<accession>B2R779</accession>
<accession>B4DLT4</accession>
<accession>B4DTG1</accession>
<accession>E7ESB8</accession>
<accession>F6UYM1</accession>
<accession>Q7Z721</accession>
<sequence length="525" mass="59140">MRRRRRRDGFYPAPDFRDREAEDMAGVFDIDLDQPEDAGSEDELEEGGQLNESMDHGGVGPYELGMEHCEKFEISETSVNRGPEKIRPECFELLRVLGKGGYGKVFQVRKVTGANTGKIFAMKVLKKAMIVRNAKDTAHTKAERNILEEVKHPFIVDLIYAFQTGGKLYLILEYLSGGELFMQLEREGIFMEDTACFYLAEISMALGHLHQKGIIYRDLKPENIMLNHQGHVKLTDFGLCKESIHDGTVTHTFCGTIEYMAPEILMRSGHNRAVDWWSLGALMYDMLTGAPPFTGENRKKTIDKILKCKLNLPPYLTQEARDLLKKLLKRNAASRLGAGPGDAGEVQAHPFFRHINWEELLARKVEPPFKPLLQSEEDVSQFDSKFTRQTPVDSPDDSTLSESANQVFLGFTYVAPSVLESVKEKFSFEPKIRSPRRFIGSPRTPVSPVKFSPGDFWGRGASASTANPQTPVEYPMETSGIEQMDVTMSGEASAPLPIRQPNSGPYKKQAFPMISKRPEHLRMNL</sequence>
<reference key="1">
    <citation type="journal article" date="1991" name="Mol. Cell. Biol.">
        <title>Cloning and expression of two human p70 S6 kinase polypeptides differing only at their amino termini.</title>
        <authorList>
            <person name="Grove J."/>
            <person name="Bonerjee P."/>
            <person name="Balasubramanyam A."/>
            <person name="Coffer P."/>
            <person name="Price D.J."/>
            <person name="Avruch J."/>
            <person name="Woodgett J.R."/>
        </authorList>
    </citation>
    <scope>NUCLEOTIDE SEQUENCE [MRNA] (ISOFORMS ALPHA I AND ALPHA II)</scope>
    <scope>ALTERNATIVE INITIATION</scope>
</reference>
<reference key="2">
    <citation type="journal article" date="2004" name="Nat. Genet.">
        <title>Complete sequencing and characterization of 21,243 full-length human cDNAs.</title>
        <authorList>
            <person name="Ota T."/>
            <person name="Suzuki Y."/>
            <person name="Nishikawa T."/>
            <person name="Otsuki T."/>
            <person name="Sugiyama T."/>
            <person name="Irie R."/>
            <person name="Wakamatsu A."/>
            <person name="Hayashi K."/>
            <person name="Sato H."/>
            <person name="Nagai K."/>
            <person name="Kimura K."/>
            <person name="Makita H."/>
            <person name="Sekine M."/>
            <person name="Obayashi M."/>
            <person name="Nishi T."/>
            <person name="Shibahara T."/>
            <person name="Tanaka T."/>
            <person name="Ishii S."/>
            <person name="Yamamoto J."/>
            <person name="Saito K."/>
            <person name="Kawai Y."/>
            <person name="Isono Y."/>
            <person name="Nakamura Y."/>
            <person name="Nagahari K."/>
            <person name="Murakami K."/>
            <person name="Yasuda T."/>
            <person name="Iwayanagi T."/>
            <person name="Wagatsuma M."/>
            <person name="Shiratori A."/>
            <person name="Sudo H."/>
            <person name="Hosoiri T."/>
            <person name="Kaku Y."/>
            <person name="Kodaira H."/>
            <person name="Kondo H."/>
            <person name="Sugawara M."/>
            <person name="Takahashi M."/>
            <person name="Kanda K."/>
            <person name="Yokoi T."/>
            <person name="Furuya T."/>
            <person name="Kikkawa E."/>
            <person name="Omura Y."/>
            <person name="Abe K."/>
            <person name="Kamihara K."/>
            <person name="Katsuta N."/>
            <person name="Sato K."/>
            <person name="Tanikawa M."/>
            <person name="Yamazaki M."/>
            <person name="Ninomiya K."/>
            <person name="Ishibashi T."/>
            <person name="Yamashita H."/>
            <person name="Murakawa K."/>
            <person name="Fujimori K."/>
            <person name="Tanai H."/>
            <person name="Kimata M."/>
            <person name="Watanabe M."/>
            <person name="Hiraoka S."/>
            <person name="Chiba Y."/>
            <person name="Ishida S."/>
            <person name="Ono Y."/>
            <person name="Takiguchi S."/>
            <person name="Watanabe S."/>
            <person name="Yosida M."/>
            <person name="Hotuta T."/>
            <person name="Kusano J."/>
            <person name="Kanehori K."/>
            <person name="Takahashi-Fujii A."/>
            <person name="Hara H."/>
            <person name="Tanase T.-O."/>
            <person name="Nomura Y."/>
            <person name="Togiya S."/>
            <person name="Komai F."/>
            <person name="Hara R."/>
            <person name="Takeuchi K."/>
            <person name="Arita M."/>
            <person name="Imose N."/>
            <person name="Musashino K."/>
            <person name="Yuuki H."/>
            <person name="Oshima A."/>
            <person name="Sasaki N."/>
            <person name="Aotsuka S."/>
            <person name="Yoshikawa Y."/>
            <person name="Matsunawa H."/>
            <person name="Ichihara T."/>
            <person name="Shiohata N."/>
            <person name="Sano S."/>
            <person name="Moriya S."/>
            <person name="Momiyama H."/>
            <person name="Satoh N."/>
            <person name="Takami S."/>
            <person name="Terashima Y."/>
            <person name="Suzuki O."/>
            <person name="Nakagawa S."/>
            <person name="Senoh A."/>
            <person name="Mizoguchi H."/>
            <person name="Goto Y."/>
            <person name="Shimizu F."/>
            <person name="Wakebe H."/>
            <person name="Hishigaki H."/>
            <person name="Watanabe T."/>
            <person name="Sugiyama A."/>
            <person name="Takemoto M."/>
            <person name="Kawakami B."/>
            <person name="Yamazaki M."/>
            <person name="Watanabe K."/>
            <person name="Kumagai A."/>
            <person name="Itakura S."/>
            <person name="Fukuzumi Y."/>
            <person name="Fujimori Y."/>
            <person name="Komiyama M."/>
            <person name="Tashiro H."/>
            <person name="Tanigami A."/>
            <person name="Fujiwara T."/>
            <person name="Ono T."/>
            <person name="Yamada K."/>
            <person name="Fujii Y."/>
            <person name="Ozaki K."/>
            <person name="Hirao M."/>
            <person name="Ohmori Y."/>
            <person name="Kawabata A."/>
            <person name="Hikiji T."/>
            <person name="Kobatake N."/>
            <person name="Inagaki H."/>
            <person name="Ikema Y."/>
            <person name="Okamoto S."/>
            <person name="Okitani R."/>
            <person name="Kawakami T."/>
            <person name="Noguchi S."/>
            <person name="Itoh T."/>
            <person name="Shigeta K."/>
            <person name="Senba T."/>
            <person name="Matsumura K."/>
            <person name="Nakajima Y."/>
            <person name="Mizuno T."/>
            <person name="Morinaga M."/>
            <person name="Sasaki M."/>
            <person name="Togashi T."/>
            <person name="Oyama M."/>
            <person name="Hata H."/>
            <person name="Watanabe M."/>
            <person name="Komatsu T."/>
            <person name="Mizushima-Sugano J."/>
            <person name="Satoh T."/>
            <person name="Shirai Y."/>
            <person name="Takahashi Y."/>
            <person name="Nakagawa K."/>
            <person name="Okumura K."/>
            <person name="Nagase T."/>
            <person name="Nomura N."/>
            <person name="Kikuchi H."/>
            <person name="Masuho Y."/>
            <person name="Yamashita R."/>
            <person name="Nakai K."/>
            <person name="Yada T."/>
            <person name="Nakamura Y."/>
            <person name="Ohara O."/>
            <person name="Isogai T."/>
            <person name="Sugano S."/>
        </authorList>
    </citation>
    <scope>NUCLEOTIDE SEQUENCE [LARGE SCALE MRNA] (ISOFORMS ALPHA I; 2 AND 4)</scope>
    <source>
        <tissue>Placenta</tissue>
        <tissue>Trachea</tissue>
    </source>
</reference>
<reference key="3">
    <citation type="journal article" date="2006" name="Nature">
        <title>DNA sequence of human chromosome 17 and analysis of rearrangement in the human lineage.</title>
        <authorList>
            <person name="Zody M.C."/>
            <person name="Garber M."/>
            <person name="Adams D.J."/>
            <person name="Sharpe T."/>
            <person name="Harrow J."/>
            <person name="Lupski J.R."/>
            <person name="Nicholson C."/>
            <person name="Searle S.M."/>
            <person name="Wilming L."/>
            <person name="Young S.K."/>
            <person name="Abouelleil A."/>
            <person name="Allen N.R."/>
            <person name="Bi W."/>
            <person name="Bloom T."/>
            <person name="Borowsky M.L."/>
            <person name="Bugalter B.E."/>
            <person name="Butler J."/>
            <person name="Chang J.L."/>
            <person name="Chen C.-K."/>
            <person name="Cook A."/>
            <person name="Corum B."/>
            <person name="Cuomo C.A."/>
            <person name="de Jong P.J."/>
            <person name="DeCaprio D."/>
            <person name="Dewar K."/>
            <person name="FitzGerald M."/>
            <person name="Gilbert J."/>
            <person name="Gibson R."/>
            <person name="Gnerre S."/>
            <person name="Goldstein S."/>
            <person name="Grafham D.V."/>
            <person name="Grocock R."/>
            <person name="Hafez N."/>
            <person name="Hagopian D.S."/>
            <person name="Hart E."/>
            <person name="Norman C.H."/>
            <person name="Humphray S."/>
            <person name="Jaffe D.B."/>
            <person name="Jones M."/>
            <person name="Kamal M."/>
            <person name="Khodiyar V.K."/>
            <person name="LaButti K."/>
            <person name="Laird G."/>
            <person name="Lehoczky J."/>
            <person name="Liu X."/>
            <person name="Lokyitsang T."/>
            <person name="Loveland J."/>
            <person name="Lui A."/>
            <person name="Macdonald P."/>
            <person name="Major J.E."/>
            <person name="Matthews L."/>
            <person name="Mauceli E."/>
            <person name="McCarroll S.A."/>
            <person name="Mihalev A.H."/>
            <person name="Mudge J."/>
            <person name="Nguyen C."/>
            <person name="Nicol R."/>
            <person name="O'Leary S.B."/>
            <person name="Osoegawa K."/>
            <person name="Schwartz D.C."/>
            <person name="Shaw-Smith C."/>
            <person name="Stankiewicz P."/>
            <person name="Steward C."/>
            <person name="Swarbreck D."/>
            <person name="Venkataraman V."/>
            <person name="Whittaker C.A."/>
            <person name="Yang X."/>
            <person name="Zimmer A.R."/>
            <person name="Bradley A."/>
            <person name="Hubbard T."/>
            <person name="Birren B.W."/>
            <person name="Rogers J."/>
            <person name="Lander E.S."/>
            <person name="Nusbaum C."/>
        </authorList>
    </citation>
    <scope>NUCLEOTIDE SEQUENCE [LARGE SCALE GENOMIC DNA]</scope>
</reference>
<reference key="4">
    <citation type="submission" date="2005-09" db="EMBL/GenBank/DDBJ databases">
        <authorList>
            <person name="Mural R.J."/>
            <person name="Istrail S."/>
            <person name="Sutton G."/>
            <person name="Florea L."/>
            <person name="Halpern A.L."/>
            <person name="Mobarry C.M."/>
            <person name="Lippert R."/>
            <person name="Walenz B."/>
            <person name="Shatkay H."/>
            <person name="Dew I."/>
            <person name="Miller J.R."/>
            <person name="Flanigan M.J."/>
            <person name="Edwards N.J."/>
            <person name="Bolanos R."/>
            <person name="Fasulo D."/>
            <person name="Halldorsson B.V."/>
            <person name="Hannenhalli S."/>
            <person name="Turner R."/>
            <person name="Yooseph S."/>
            <person name="Lu F."/>
            <person name="Nusskern D.R."/>
            <person name="Shue B.C."/>
            <person name="Zheng X.H."/>
            <person name="Zhong F."/>
            <person name="Delcher A.L."/>
            <person name="Huson D.H."/>
            <person name="Kravitz S.A."/>
            <person name="Mouchard L."/>
            <person name="Reinert K."/>
            <person name="Remington K.A."/>
            <person name="Clark A.G."/>
            <person name="Waterman M.S."/>
            <person name="Eichler E.E."/>
            <person name="Adams M.D."/>
            <person name="Hunkapiller M.W."/>
            <person name="Myers E.W."/>
            <person name="Venter J.C."/>
        </authorList>
    </citation>
    <scope>NUCLEOTIDE SEQUENCE [LARGE SCALE GENOMIC DNA]</scope>
</reference>
<reference key="5">
    <citation type="journal article" date="2004" name="Genome Res.">
        <title>The status, quality, and expansion of the NIH full-length cDNA project: the Mammalian Gene Collection (MGC).</title>
        <authorList>
            <consortium name="The MGC Project Team"/>
        </authorList>
    </citation>
    <scope>NUCLEOTIDE SEQUENCE [LARGE SCALE MRNA] (ISOFORM 3)</scope>
    <source>
        <tissue>Eye</tissue>
    </source>
</reference>
<reference key="6">
    <citation type="journal article" date="1998" name="J. Biol. Chem.">
        <title>Molecular cloning and characterization of a novel p70 S6 kinase, p70 S6 kinase beta containing a proline-rich region.</title>
        <authorList>
            <person name="Gout I."/>
            <person name="Minami T."/>
            <person name="Hara K."/>
            <person name="Tsujishita Y."/>
            <person name="Filonenko V."/>
            <person name="Waterfield M.D."/>
            <person name="Yonezawa K."/>
        </authorList>
    </citation>
    <scope>TISSUE SPECIFICITY</scope>
</reference>
<reference key="7">
    <citation type="journal article" date="1998" name="Science">
        <title>Phosphorylation and activation of p70s6k by PDK1.</title>
        <authorList>
            <person name="Pullen N."/>
            <person name="Dennis P.B."/>
            <person name="Andjelkovic M."/>
            <person name="Dufner A."/>
            <person name="Kozma S.C."/>
            <person name="Hemmings B.A."/>
            <person name="Thomas G."/>
        </authorList>
    </citation>
    <scope>ACTIVITY REGULATION</scope>
    <scope>PHOSPHORYLATION AT THR-252</scope>
    <scope>MUTAGENESIS OF THR-412; SER-434; SER-441; THR-444 AND SER-447</scope>
</reference>
<reference key="8">
    <citation type="journal article" date="2001" name="EMBO J.">
        <title>Regulation of elongation factor 2 kinase by p90(RSK1) and p70 S6 kinase.</title>
        <authorList>
            <person name="Wang X."/>
            <person name="Li W."/>
            <person name="Williams M."/>
            <person name="Terada N."/>
            <person name="Alessi D.R."/>
            <person name="Proud C.G."/>
        </authorList>
    </citation>
    <scope>FUNCTION IN PHOSPHORYLATION OF EEF2K</scope>
    <scope>FUNCTION IN TRANSLATION REGULATION</scope>
</reference>
<reference key="9">
    <citation type="journal article" date="2002" name="Cell">
        <title>Raptor, a binding partner of target of rapamycin (TOR), mediates TOR action.</title>
        <authorList>
            <person name="Hara K."/>
            <person name="Maruki Y."/>
            <person name="Long X."/>
            <person name="Yoshino K."/>
            <person name="Oshiro N."/>
            <person name="Hidayat S."/>
            <person name="Tokunaga C."/>
            <person name="Avruch J."/>
            <person name="Yonezawa K."/>
        </authorList>
    </citation>
    <scope>INTERACTION WITH RPTOR</scope>
</reference>
<reference key="10">
    <citation type="journal article" date="2003" name="Leuk. Res.">
        <title>Tumor necrosis factor receptor-associated factor (TRAF) 4 is a new binding partner for the p70S6 serine/threonine kinase.</title>
        <authorList>
            <person name="Fleckenstein D.S."/>
            <person name="Dirks W.G."/>
            <person name="Drexler H.G."/>
            <person name="Quentmeier H."/>
        </authorList>
    </citation>
    <scope>FUNCTION</scope>
    <scope>INTERACTION WITH TRAF4</scope>
</reference>
<reference key="11">
    <citation type="journal article" date="2004" name="Curr. Biol.">
        <title>SKAR is a specific target of S6 kinase 1 in cell growth control.</title>
        <authorList>
            <person name="Richardson C.J."/>
            <person name="Broenstrup M."/>
            <person name="Fingar D.C."/>
            <person name="Julich K."/>
            <person name="Ballif B.A."/>
            <person name="Gygi S."/>
            <person name="Blenis J."/>
        </authorList>
    </citation>
    <scope>FUNCTION</scope>
    <scope>INTERACTION WITH POLDIP3</scope>
</reference>
<reference key="12">
    <citation type="journal article" date="2004" name="EMBO J.">
        <title>Phosphorylation of eucaryotic translation initiation factor 4B Ser422 is modulated by S6 kinases.</title>
        <authorList>
            <person name="Raught B."/>
            <person name="Peiretti F."/>
            <person name="Gingras A.C."/>
            <person name="Livingstone M."/>
            <person name="Shahbazian D."/>
            <person name="Mayeur G.L."/>
            <person name="Polakiewicz R.D."/>
            <person name="Sonenberg N."/>
            <person name="Hershey J.W."/>
        </authorList>
    </citation>
    <scope>FUNCTION IN PHOSPHORYLATION OF EIF4B</scope>
</reference>
<reference key="13">
    <citation type="journal article" date="2004" name="Mol. Cell. Biol.">
        <title>mTOR controls cell cycle progression through its cell growth effectors S6K1 and 4E-BP1/eukaryotic translation initiation factor 4E.</title>
        <authorList>
            <person name="Fingar D.C."/>
            <person name="Richardson C.J."/>
            <person name="Tee A.R."/>
            <person name="Cheatham L."/>
            <person name="Tsou C."/>
            <person name="Blenis J."/>
        </authorList>
    </citation>
    <scope>FUNCTION IN CELL CYCLE PROGRESSION</scope>
</reference>
<reference key="14">
    <citation type="journal article" date="2005" name="Cell">
        <title>mTOR and S6K1 mediate assembly of the translation preinitiation complex through dynamic protein interchange and ordered phosphorylation events.</title>
        <authorList>
            <person name="Holz M.K."/>
            <person name="Ballif B.A."/>
            <person name="Gygi S.P."/>
            <person name="Blenis J."/>
        </authorList>
    </citation>
    <scope>FUNCTION IN TRANSLATION INITIATION</scope>
    <scope>INTERACTION WITH EIF3B AND EIF3C</scope>
    <scope>MUTAGENESIS OF THR-412</scope>
</reference>
<reference key="15">
    <citation type="journal article" date="2005" name="J. Biol. Chem.">
        <title>Phosphorylation of mammalian target of rapamycin (mTOR) at Ser-2448 is mediated by p70S6 kinase.</title>
        <authorList>
            <person name="Chiang G.G."/>
            <person name="Abraham R.T."/>
        </authorList>
    </citation>
    <scope>FUNCTION</scope>
    <scope>CATALYTIC ACTIVITY</scope>
</reference>
<reference key="16">
    <citation type="journal article" date="2006" name="Mol. Cell">
        <title>S6K1 regulates GSK3 under conditions of mTOR-dependent feedback inhibition of Akt.</title>
        <authorList>
            <person name="Zhang H.H."/>
            <person name="Lipovsky A.I."/>
            <person name="Dibble C.C."/>
            <person name="Sahin M."/>
            <person name="Manning B.D."/>
        </authorList>
    </citation>
    <scope>FUNCTION IN PHOSPHORYLATION OF GSK3B</scope>
</reference>
<reference key="17">
    <citation type="journal article" date="2006" name="Science">
        <title>S6K1- and betaTRCP-mediated degradation of PDCD4 promotes protein translation and cell growth.</title>
        <authorList>
            <person name="Dorrello N.V."/>
            <person name="Peschiaroli A."/>
            <person name="Guardavaccaro D."/>
            <person name="Colburn N.H."/>
            <person name="Sherman N.E."/>
            <person name="Pagano M."/>
        </authorList>
    </citation>
    <scope>FUNCTION</scope>
</reference>
<reference key="18">
    <citation type="journal article" date="2007" name="EMBO J.">
        <title>Mechanism for activation of the growth factor-activated AGC kinases by turn motif phosphorylation.</title>
        <authorList>
            <person name="Hauge C."/>
            <person name="Antal T.L."/>
            <person name="Hirschberg D."/>
            <person name="Doehn U."/>
            <person name="Thorup K."/>
            <person name="Idrissova L."/>
            <person name="Hansen K."/>
            <person name="Jensen O.N."/>
            <person name="Jorgensen T.J."/>
            <person name="Biondi R.M."/>
            <person name="Frodin M."/>
        </authorList>
    </citation>
    <scope>ACTIVITY REGULATION</scope>
    <scope>MUTAGENESIS OF LYS-167 AND SER-394</scope>
</reference>
<reference key="19">
    <citation type="journal article" date="2007" name="Mol. Cell">
        <title>S6K1-mediated disassembly of mitochondrial URI/PP1gamma complexes activates a negative feedback program that counters S6K1 survival signaling.</title>
        <authorList>
            <person name="Djouder N."/>
            <person name="Metzler S.C."/>
            <person name="Schmidt A."/>
            <person name="Wirbelauer C."/>
            <person name="Gstaiger M."/>
            <person name="Aebersold R."/>
            <person name="Hess D."/>
            <person name="Krek W."/>
        </authorList>
    </citation>
    <scope>FUNCTION IN PHOSPHORYLATION OF URI1</scope>
    <scope>CATALYTIC ACTIVITY</scope>
    <scope>DEPHOSPHORYLATION AT THR-412 BY PPP1CC</scope>
    <scope>SUBCELLULAR LOCATION</scope>
</reference>
<reference key="20">
    <citation type="journal article" date="2008" name="Biochem. J.">
        <title>mTOR complex 2 (mTORC2) controls hydrophobic motif phosphorylation and activation of serum- and glucocorticoid-induced protein kinase 1 (SGK1).</title>
        <authorList>
            <person name="Garcia-Martinez J.M."/>
            <person name="Alessi D.R."/>
        </authorList>
    </citation>
    <scope>PHOSPHORYLATION AT THR-412</scope>
</reference>
<reference key="21">
    <citation type="journal article" date="2008" name="J. Biol. Chem.">
        <title>S6K directly phosphorylates IRS-1 on Ser-270 to promote insulin resistance in response to TNF-(alpha) signaling through IKK2.</title>
        <authorList>
            <person name="Zhang J."/>
            <person name="Gao Z."/>
            <person name="Yin J."/>
            <person name="Quon M.J."/>
            <person name="Ye J."/>
        </authorList>
    </citation>
    <scope>FUNCTION IN PHOSPHORYLATION OF IRS1</scope>
    <scope>CATALYTIC ACTIVITY</scope>
    <scope>FUNCTION IN GLUCOSE HOMEOSTASIS</scope>
    <scope>INTERACTION WITH IRS1</scope>
</reference>
<reference key="22">
    <citation type="journal article" date="2008" name="Proc. Natl. Acad. Sci. U.S.A.">
        <title>A quantitative atlas of mitotic phosphorylation.</title>
        <authorList>
            <person name="Dephoure N."/>
            <person name="Zhou C."/>
            <person name="Villen J."/>
            <person name="Beausoleil S.A."/>
            <person name="Bakalarski C.E."/>
            <person name="Elledge S.J."/>
            <person name="Gygi S.P."/>
        </authorList>
    </citation>
    <scope>IDENTIFICATION BY MASS SPECTROMETRY [LARGE SCALE ANALYSIS]</scope>
    <source>
        <tissue>Cervix carcinoma</tissue>
    </source>
</reference>
<reference key="23">
    <citation type="journal article" date="2009" name="Growth Factors">
        <title>Regulation and localization of ribosomal protein S6 kinase 1 isoforms.</title>
        <authorList>
            <person name="Kim D."/>
            <person name="Akcakanat A."/>
            <person name="Singh G."/>
            <person name="Sharma C."/>
            <person name="Meric-Bernstam F."/>
        </authorList>
    </citation>
    <scope>FUNCTION</scope>
    <scope>CATALYTIC ACTIVITY</scope>
    <scope>ALTERNATIVE SPLICING</scope>
    <scope>PHOSPHORYLATION AT SER-394; THR-412; THR-444 AND SER-447</scope>
    <scope>SUBCELLULAR LOCATION</scope>
</reference>
<reference key="24">
    <citation type="journal article" date="2009" name="J. Biol. Chem.">
        <title>Mechanism of PDK1-catalyzed Thr-229 phosphorylation of the S6K1 protein kinase.</title>
        <authorList>
            <person name="Keshwani M.M."/>
            <person name="Gao X."/>
            <person name="Harris T.K."/>
        </authorList>
    </citation>
    <scope>ACTIVITY REGULATION</scope>
    <scope>MUTAGENESIS OF THR-412</scope>
</reference>
<reference key="25">
    <citation type="journal article" date="2009" name="Mol. Cell. Biol.">
        <title>Characterization of Rictor phosphorylation sites reveals direct regulation of mTOR complex 2 by S6K1.</title>
        <authorList>
            <person name="Dibble C.C."/>
            <person name="Asara J.M."/>
            <person name="Manning B.D."/>
        </authorList>
    </citation>
    <scope>FUNCTION IN PHOSPHORYLATION OF RICTOR</scope>
</reference>
<reference key="26">
    <citation type="journal article" date="2009" name="Sci. Signal.">
        <title>Quantitative phosphoproteomic analysis of T cell receptor signaling reveals system-wide modulation of protein-protein interactions.</title>
        <authorList>
            <person name="Mayya V."/>
            <person name="Lundgren D.H."/>
            <person name="Hwang S.-I."/>
            <person name="Rezaul K."/>
            <person name="Wu L."/>
            <person name="Eng J.K."/>
            <person name="Rodionov V."/>
            <person name="Han D.K."/>
        </authorList>
    </citation>
    <scope>PHOSPHORYLATION [LARGE SCALE ANALYSIS] AT SER-447</scope>
    <scope>IDENTIFICATION BY MASS SPECTROMETRY [LARGE SCALE ANALYSIS]</scope>
    <source>
        <tissue>Leukemic T-cell</tissue>
    </source>
</reference>
<reference key="27">
    <citation type="journal article" date="2010" name="Mol. Cell. Biol.">
        <title>mTORC1-activated S6K1 phosphorylates Rictor on threonine 1135 and regulates mTORC2 signaling.</title>
        <authorList>
            <person name="Julien L.A."/>
            <person name="Carriere A."/>
            <person name="Moreau J."/>
            <person name="Roux P.P."/>
        </authorList>
    </citation>
    <scope>FUNCTION IN PHOSPHORYLATION OF RICTOR</scope>
</reference>
<reference key="28">
    <citation type="journal article" date="2010" name="Oncogene">
        <title>Rictor is a novel target of p70 S6 kinase-1.</title>
        <authorList>
            <person name="Treins C."/>
            <person name="Warne P.H."/>
            <person name="Magnuson M.A."/>
            <person name="Pende M."/>
            <person name="Downward J."/>
        </authorList>
    </citation>
    <scope>FUNCTION IN PHOSPHORYLATION OF RICTOR</scope>
</reference>
<reference key="29">
    <citation type="journal article" date="2007" name="Growth Factors">
        <title>Coordinate regulation of ribosome biogenesis and function by the ribosomal protein S6 kinase, a key mediator of mTOR function.</title>
        <authorList>
            <person name="Jastrzebski K."/>
            <person name="Hannan K.M."/>
            <person name="Tchoubrieva E.B."/>
            <person name="Hannan R.D."/>
            <person name="Pearson R.B."/>
        </authorList>
    </citation>
    <scope>REVIEW ON FUNCTION</scope>
    <scope>REVIEW ON ACTIVITY REGULATION</scope>
</reference>
<reference key="30">
    <citation type="journal article" date="2010" name="Sci. Signal.">
        <title>Quantitative phosphoproteomics reveals widespread full phosphorylation site occupancy during mitosis.</title>
        <authorList>
            <person name="Olsen J.V."/>
            <person name="Vermeulen M."/>
            <person name="Santamaria A."/>
            <person name="Kumar C."/>
            <person name="Miller M.L."/>
            <person name="Jensen L.J."/>
            <person name="Gnad F."/>
            <person name="Cox J."/>
            <person name="Jensen T.S."/>
            <person name="Nigg E.A."/>
            <person name="Brunak S."/>
            <person name="Mann M."/>
        </authorList>
    </citation>
    <scope>PHOSPHORYLATION [LARGE SCALE ANALYSIS] AT SER-441; THR-444; SER-447 AND SER-452</scope>
    <scope>IDENTIFICATION BY MASS SPECTROMETRY [LARGE SCALE ANALYSIS]</scope>
    <source>
        <tissue>Cervix carcinoma</tissue>
    </source>
</reference>
<reference key="31">
    <citation type="journal article" date="2011" name="Int. J. Biochem. Cell Biol.">
        <title>Functions and regulation of the 70kDa ribosomal S6 kinases.</title>
        <authorList>
            <person name="Fenton T.R."/>
            <person name="Gout I.T."/>
        </authorList>
    </citation>
    <scope>REVIEW ON FUNCTION</scope>
    <scope>REVIEW ON ACTIVITY REGULATION</scope>
</reference>
<reference key="32">
    <citation type="journal article" date="2011" name="Mol. Cell">
        <title>DEPTOR, an mTOR inhibitor, is a physiological substrate of SCF(betaTrCP) E3 ubiquitin ligase and regulates survival and autophagy.</title>
        <authorList>
            <person name="Zhao Y."/>
            <person name="Xiong X."/>
            <person name="Sun Y."/>
        </authorList>
    </citation>
    <scope>FUNCTION</scope>
    <scope>PHOSPHORYLATION</scope>
</reference>
<reference key="33">
    <citation type="journal article" date="2013" name="J. Proteome Res.">
        <title>Toward a comprehensive characterization of a human cancer cell phosphoproteome.</title>
        <authorList>
            <person name="Zhou H."/>
            <person name="Di Palma S."/>
            <person name="Preisinger C."/>
            <person name="Peng M."/>
            <person name="Polat A.N."/>
            <person name="Heck A.J."/>
            <person name="Mohammed S."/>
        </authorList>
    </citation>
    <scope>PHOSPHORYLATION [LARGE SCALE ANALYSIS] AT THR-444 AND SER-447</scope>
    <scope>IDENTIFICATION BY MASS SPECTROMETRY [LARGE SCALE ANALYSIS]</scope>
    <source>
        <tissue>Cervix carcinoma</tissue>
        <tissue>Erythroleukemia</tissue>
    </source>
</reference>
<reference key="34">
    <citation type="journal article" date="2013" name="Science">
        <title>Stimulation of de novo pyrimidine synthesis by growth signaling through mTOR and S6K1.</title>
        <authorList>
            <person name="Ben-Sahra I."/>
            <person name="Howell J.J."/>
            <person name="Asara J.M."/>
            <person name="Manning B.D."/>
        </authorList>
    </citation>
    <scope>FUNCTION</scope>
    <scope>PHOSPHORYLATION OF CAD</scope>
    <scope>PHOSPHORYLATION BY MTOR</scope>
</reference>
<reference key="35">
    <citation type="journal article" date="2015" name="FEBS Lett.">
        <title>Immediate-early response 5 (IER5) interacts with protein phosphatase 2A and regulates the phosphorylation of ribosomal protein S6 kinase and heat shock factor 1.</title>
        <authorList>
            <person name="Kawabata S."/>
            <person name="Ishita Y."/>
            <person name="Ishikawa Y."/>
            <person name="Sakurai H."/>
        </authorList>
    </citation>
    <scope>INTERACTION WITH IER5</scope>
</reference>
<reference key="36">
    <citation type="journal article" date="2017" name="Nature">
        <title>EPRS is a critical mTORC1-S6K1 effector that influences adiposity in mice.</title>
        <authorList>
            <person name="Arif A."/>
            <person name="Terenzi F."/>
            <person name="Potdar A.A."/>
            <person name="Jia J."/>
            <person name="Sacks J."/>
            <person name="China A."/>
            <person name="Halawani D."/>
            <person name="Vasu K."/>
            <person name="Li X."/>
            <person name="Brown J.M."/>
            <person name="Chen J."/>
            <person name="Kozma S.C."/>
            <person name="Thomas G."/>
            <person name="Fox P.L."/>
        </authorList>
    </citation>
    <scope>FUNCTION IN PHOSPHORYLATION OF EPRS</scope>
    <scope>CATALYTIC ACTIVITY</scope>
    <scope>ACTIVITY REGULATION</scope>
</reference>
<reference key="37">
    <citation type="journal article" date="2018" name="Sci. Adv.">
        <title>Mammalian EAK-7 activates alternative mTOR signaling to regulate cell proliferation and migration.</title>
        <authorList>
            <person name="Nguyen J.T."/>
            <person name="Ray C."/>
            <person name="Fox A.L."/>
            <person name="Mendonca D.B."/>
            <person name="Kim J.K."/>
            <person name="Krebsbach P.H."/>
        </authorList>
    </citation>
    <scope>PHOSPHORYLATION AT THR-412</scope>
</reference>
<reference key="38">
    <citation type="journal article" date="2020" name="J. Virol.">
        <title>Regulation of Mumps Virus Replication and Transcription by Kinase RPS6KB1.</title>
        <authorList>
            <person name="Briggs K."/>
            <person name="Wang L."/>
            <person name="Nagashima K."/>
            <person name="Zengel J."/>
            <person name="Tripp R.A."/>
            <person name="He B."/>
        </authorList>
    </citation>
    <scope>INTERACTION WITH MUMPS VIRUS PHOSPHOPROTEIN (MICROBIAL INFECTION)</scope>
</reference>
<reference key="39">
    <citation type="journal article" date="2010" name="J. Biol. Chem.">
        <title>Structural basis of human p70 ribosomal S6 kinase-1 regulation by activation loop phosphorylation.</title>
        <authorList>
            <person name="Sunami T."/>
            <person name="Byrne N."/>
            <person name="Diehl R.E."/>
            <person name="Funabashi K."/>
            <person name="Hall D.L."/>
            <person name="Ikuta M."/>
            <person name="Patel S.B."/>
            <person name="Shipman J.M."/>
            <person name="Smith R.F."/>
            <person name="Takahashi I."/>
            <person name="Zugay-Murphy J."/>
            <person name="Iwasawa Y."/>
            <person name="Lumb K.J."/>
            <person name="Munshi S.K."/>
            <person name="Sharma S."/>
        </authorList>
    </citation>
    <scope>X-RAY CRYSTALLOGRAPHY (2.35 ANGSTROMS) OF 75-399</scope>
    <scope>PHOSPHORYLATION AT THR-252</scope>
</reference>
<reference evidence="44 45" key="40">
    <citation type="journal article" date="2017" name="Nature">
        <title>Mechanisms of mTORC1 activation by RHEB and inhibition by PRAS40.</title>
        <authorList>
            <person name="Yang H."/>
            <person name="Jiang X."/>
            <person name="Li B."/>
            <person name="Yang H.J."/>
            <person name="Miller M."/>
            <person name="Yang A."/>
            <person name="Dhar A."/>
            <person name="Pavletich N.P."/>
        </authorList>
    </citation>
    <scope>X-RAY CRYSTALLOGRAPHY (1.75 ANGSTROMS) OF 412-437 IN COMPLEX WITH MTOR</scope>
    <scope>PHOSPHORYLATION AT THR-412</scope>
</reference>
<reference key="41">
    <citation type="journal article" date="2006" name="Science">
        <title>The consensus coding sequences of human breast and colorectal cancers.</title>
        <authorList>
            <person name="Sjoeblom T."/>
            <person name="Jones S."/>
            <person name="Wood L.D."/>
            <person name="Parsons D.W."/>
            <person name="Lin J."/>
            <person name="Barber T.D."/>
            <person name="Mandelker D."/>
            <person name="Leary R.J."/>
            <person name="Ptak J."/>
            <person name="Silliman N."/>
            <person name="Szabo S."/>
            <person name="Buckhaults P."/>
            <person name="Farrell C."/>
            <person name="Meeh P."/>
            <person name="Markowitz S.D."/>
            <person name="Willis J."/>
            <person name="Dawson D."/>
            <person name="Willson J.K.V."/>
            <person name="Gazdar A.F."/>
            <person name="Hartigan J."/>
            <person name="Wu L."/>
            <person name="Liu C."/>
            <person name="Parmigiani G."/>
            <person name="Park B.H."/>
            <person name="Bachman K.E."/>
            <person name="Papadopoulos N."/>
            <person name="Vogelstein B."/>
            <person name="Kinzler K.W."/>
            <person name="Velculescu V.E."/>
        </authorList>
    </citation>
    <scope>VARIANT [LARGE SCALE ANALYSIS] GLU-289</scope>
</reference>
<reference key="42">
    <citation type="journal article" date="2007" name="Nature">
        <title>Patterns of somatic mutation in human cancer genomes.</title>
        <authorList>
            <person name="Greenman C."/>
            <person name="Stephens P."/>
            <person name="Smith R."/>
            <person name="Dalgliesh G.L."/>
            <person name="Hunter C."/>
            <person name="Bignell G."/>
            <person name="Davies H."/>
            <person name="Teague J."/>
            <person name="Butler A."/>
            <person name="Stevens C."/>
            <person name="Edkins S."/>
            <person name="O'Meara S."/>
            <person name="Vastrik I."/>
            <person name="Schmidt E.E."/>
            <person name="Avis T."/>
            <person name="Barthorpe S."/>
            <person name="Bhamra G."/>
            <person name="Buck G."/>
            <person name="Choudhury B."/>
            <person name="Clements J."/>
            <person name="Cole J."/>
            <person name="Dicks E."/>
            <person name="Forbes S."/>
            <person name="Gray K."/>
            <person name="Halliday K."/>
            <person name="Harrison R."/>
            <person name="Hills K."/>
            <person name="Hinton J."/>
            <person name="Jenkinson A."/>
            <person name="Jones D."/>
            <person name="Menzies A."/>
            <person name="Mironenko T."/>
            <person name="Perry J."/>
            <person name="Raine K."/>
            <person name="Richardson D."/>
            <person name="Shepherd R."/>
            <person name="Small A."/>
            <person name="Tofts C."/>
            <person name="Varian J."/>
            <person name="Webb T."/>
            <person name="West S."/>
            <person name="Widaa S."/>
            <person name="Yates A."/>
            <person name="Cahill D.P."/>
            <person name="Louis D.N."/>
            <person name="Goldstraw P."/>
            <person name="Nicholson A.G."/>
            <person name="Brasseur F."/>
            <person name="Looijenga L."/>
            <person name="Weber B.L."/>
            <person name="Chiew Y.-E."/>
            <person name="DeFazio A."/>
            <person name="Greaves M.F."/>
            <person name="Green A.R."/>
            <person name="Campbell P."/>
            <person name="Birney E."/>
            <person name="Easton D.F."/>
            <person name="Chenevix-Trench G."/>
            <person name="Tan M.-H."/>
            <person name="Khoo S.K."/>
            <person name="Teh B.T."/>
            <person name="Yuen S.T."/>
            <person name="Leung S.Y."/>
            <person name="Wooster R."/>
            <person name="Futreal P.A."/>
            <person name="Stratton M.R."/>
        </authorList>
    </citation>
    <scope>VARIANTS [LARGE SCALE ANALYSIS] ILE-225; CYS-272; CYS-276 AND ALA-398</scope>
</reference>
<comment type="function">
    <text evidence="2 3 8 10 11 12 13 14 15 17 18 21 23 24 26 28 29 30 31 33">Serine/threonine-protein kinase that acts downstream of mTOR signaling in response to growth factors and nutrients to promote cell proliferation, cell growth and cell cycle progression (PubMed:11500364, PubMed:12801526, PubMed:14673156, PubMed:15071500, PubMed:15341740, PubMed:16286006, PubMed:17052453, PubMed:17053147, PubMed:17936702, PubMed:18952604, PubMed:19085255, PubMed:19720745, PubMed:19935711, PubMed:19995915, PubMed:22017876, PubMed:23429703, PubMed:28178239). Regulates protein synthesis through phosphorylation of EIF4B, RPS6 and EEF2K, and contributes to cell survival by repressing the pro-apoptotic function of BAD (PubMed:11500364, PubMed:12801526, PubMed:14673156, PubMed:15071500, PubMed:15341740, PubMed:16286006, PubMed:17052453, PubMed:17053147, PubMed:17936702, PubMed:18952604, PubMed:19085255, PubMed:19720745, PubMed:19935711, PubMed:19995915, PubMed:22017876, PubMed:23429703, PubMed:28178239). Under conditions of nutrient depletion, the inactive form associates with the EIF3 translation initiation complex (PubMed:16286006). Upon mitogenic stimulation, phosphorylation by the mechanistic target of rapamycin complex 1 (mTORC1) leads to dissociation from the EIF3 complex and activation (PubMed:16286006). The active form then phosphorylates and activates several substrates in the pre-initiation complex, including the EIF2B complex and the cap-binding complex component EIF4B (PubMed:16286006). Also controls translation initiation by phosphorylating a negative regulator of EIF4A, PDCD4, targeting it for ubiquitination and subsequent proteolysis (PubMed:17053147). Promotes initiation of the pioneer round of protein synthesis by phosphorylating POLDIP3/SKAR (PubMed:15341740). In response to IGF1, activates translation elongation by phosphorylating EEF2 kinase (EEF2K), which leads to its inhibition and thus activation of EEF2 (PubMed:11500364). Also plays a role in feedback regulation of mTORC2 by mTORC1 by phosphorylating MAPKAP1/SIN1, MTOR and RICTOR, resulting in the inhibition of mTORC2 and AKT1 signaling (PubMed:15899889, PubMed:19720745, PubMed:19935711, PubMed:19995915). Also involved in feedback regulation of mTORC1 and mTORC2 by phosphorylating DEPTOR (PubMed:22017876). Mediates cell survival by phosphorylating the pro-apoptotic protein BAD and suppressing its pro-apoptotic function (By similarity). Phosphorylates mitochondrial URI1 leading to dissociation of a URI1-PPP1CC complex (PubMed:17936702). The free mitochondrial PPP1CC can then dephosphorylate RPS6KB1 at Thr-412, which is proposed to be a negative feedback mechanism for the RPS6KB1 anti-apoptotic function (PubMed:17936702). Mediates TNF-alpha-induced insulin resistance by phosphorylating IRS1 at multiple serine residues, resulting in accelerated degradation of IRS1 (PubMed:18952604). In cells lacking functional TSC1-2 complex, constitutively phosphorylates and inhibits GSK3B (PubMed:17052453). May be involved in cytoskeletal rearrangement through binding to neurabin (By similarity). Phosphorylates and activates the pyrimidine biosynthesis enzyme CAD, downstream of MTOR (PubMed:23429703). Following activation by mTORC1, phosphorylates EPRS and thereby plays a key role in fatty acid uptake by adipocytes and also most probably in interferon-gamma-induced translation inhibition (PubMed:28178239).</text>
</comment>
<comment type="catalytic activity">
    <reaction evidence="14 21 23 24 33">
        <text>L-seryl-[protein] + ATP = O-phospho-L-seryl-[protein] + ADP + H(+)</text>
        <dbReference type="Rhea" id="RHEA:17989"/>
        <dbReference type="Rhea" id="RHEA-COMP:9863"/>
        <dbReference type="Rhea" id="RHEA-COMP:11604"/>
        <dbReference type="ChEBI" id="CHEBI:15378"/>
        <dbReference type="ChEBI" id="CHEBI:29999"/>
        <dbReference type="ChEBI" id="CHEBI:30616"/>
        <dbReference type="ChEBI" id="CHEBI:83421"/>
        <dbReference type="ChEBI" id="CHEBI:456216"/>
        <dbReference type="EC" id="2.7.11.1"/>
    </reaction>
</comment>
<comment type="catalytic activity">
    <reaction evidence="21 23 24 33">
        <text>L-threonyl-[protein] + ATP = O-phospho-L-threonyl-[protein] + ADP + H(+)</text>
        <dbReference type="Rhea" id="RHEA:46608"/>
        <dbReference type="Rhea" id="RHEA-COMP:11060"/>
        <dbReference type="Rhea" id="RHEA-COMP:11605"/>
        <dbReference type="ChEBI" id="CHEBI:15378"/>
        <dbReference type="ChEBI" id="CHEBI:30013"/>
        <dbReference type="ChEBI" id="CHEBI:30616"/>
        <dbReference type="ChEBI" id="CHEBI:61977"/>
        <dbReference type="ChEBI" id="CHEBI:456216"/>
        <dbReference type="EC" id="2.7.11.1"/>
    </reaction>
</comment>
<comment type="activity regulation">
    <text evidence="20 25 33 37">Activation requires multiple phosphorylation events on serine/threonine residues. Activation appears to be first mediated by phosphorylation of multiple sites in the autoinhibitory domain, which facilitates phosphorylation at Thr-412, disrupting the autoinhibitory mechanism and allowing phosphorylation of Thr-252 by PDPK1. The active conformation of the kinase is believed to be stabilized by a mechanism involving three conserved phosphorylation sites located in the kinase domain activation loop (Thr-252) and in the AGC-kinase C-terminal domain (Ser-394 in the middle of the tail/linker region and Thr-412 within a hydrophobic motif at its end). Activated by mTORC1; isoform Alpha I and isoform Alpha II are sensitive to rapamycin, which inhibits activating phosphorylation at Thr-412. Activated by PDPK1.</text>
</comment>
<comment type="subunit">
    <text evidence="2 9 10 13 15 23 32">Interacts with PPP1R9A/neurabin-1 (By similarity). Interacts with RPTOR (PubMed:12150926). Interacts with IRS1 (PubMed:18952604). Interacts with EIF3B and EIF3C (PubMed:16286006). Interacts with TRAF4 (PubMed:12801526). Interacts with POLDIP3 (PubMed:15341740). Interacts (via N-terminus) with IER5 (PubMed:26496226).</text>
</comment>
<comment type="subunit">
    <text evidence="36">(Microbial infection) Interacts with Mumps virus phosphoprotein; this interaction may play a role in the viral replication and transcription.</text>
</comment>
<comment type="interaction">
    <interactant intactId="EBI-1775921">
        <id>P23443</id>
    </interactant>
    <interactant intactId="EBI-296087">
        <id>P31749</id>
        <label>AKT1</label>
    </interactant>
    <organismsDiffer>false</organismsDiffer>
    <experiments>3</experiments>
</comment>
<comment type="interaction">
    <interactant intactId="EBI-1775921">
        <id>P23443</id>
    </interactant>
    <interactant intactId="EBI-25646567">
        <id>Q06481-5</id>
        <label>APLP2</label>
    </interactant>
    <organismsDiffer>false</organismsDiffer>
    <experiments>3</experiments>
</comment>
<comment type="interaction">
    <interactant intactId="EBI-1775921">
        <id>P23443</id>
    </interactant>
    <interactant intactId="EBI-366696">
        <id>P55884</id>
        <label>EIF3B</label>
    </interactant>
    <organismsDiffer>false</organismsDiffer>
    <experiments>3</experiments>
</comment>
<comment type="interaction">
    <interactant intactId="EBI-1775921">
        <id>P23443</id>
    </interactant>
    <interactant intactId="EBI-308084">
        <id>P08151</id>
        <label>GLI1</label>
    </interactant>
    <organismsDiffer>false</organismsDiffer>
    <experiments>4</experiments>
</comment>
<comment type="interaction">
    <interactant intactId="EBI-1775921">
        <id>P23443</id>
    </interactant>
    <interactant intactId="EBI-1774000">
        <id>Q5VY09</id>
        <label>IER5</label>
    </interactant>
    <organismsDiffer>false</organismsDiffer>
    <experiments>2</experiments>
</comment>
<comment type="interaction">
    <interactant intactId="EBI-1775921">
        <id>P23443</id>
    </interactant>
    <interactant intactId="EBI-1052159">
        <id>Q00005</id>
        <label>PPP2R2B</label>
    </interactant>
    <organismsDiffer>false</organismsDiffer>
    <experiments>2</experiments>
</comment>
<comment type="interaction">
    <interactant intactId="EBI-1775921">
        <id>P23443</id>
    </interactant>
    <interactant intactId="EBI-25834258">
        <id>P13051-2</id>
        <label>UNG</label>
    </interactant>
    <organismsDiffer>false</organismsDiffer>
    <experiments>3</experiments>
</comment>
<comment type="interaction">
    <interactant intactId="EBI-6093204">
        <id>P23443-2</id>
    </interactant>
    <interactant intactId="EBI-308084">
        <id>P08151</id>
        <label>GLI1</label>
    </interactant>
    <organismsDiffer>false</organismsDiffer>
    <experiments>2</experiments>
</comment>
<comment type="interaction">
    <interactant intactId="EBI-25882353">
        <id>P23443-4</id>
    </interactant>
    <interactant intactId="EBI-77613">
        <id>P05067</id>
        <label>APP</label>
    </interactant>
    <organismsDiffer>false</organismsDiffer>
    <experiments>3</experiments>
</comment>
<comment type="interaction">
    <interactant intactId="EBI-25882353">
        <id>P23443-4</id>
    </interactant>
    <interactant intactId="EBI-9090282">
        <id>P27986-2</id>
        <label>PIK3R1</label>
    </interactant>
    <organismsDiffer>false</organismsDiffer>
    <experiments>3</experiments>
</comment>
<comment type="subcellular location">
    <subcellularLocation>
        <location evidence="1">Synapse</location>
        <location evidence="1">Synaptosome</location>
    </subcellularLocation>
    <subcellularLocation>
        <location>Mitochondrion outer membrane</location>
    </subcellularLocation>
    <subcellularLocation>
        <location>Mitochondrion</location>
    </subcellularLocation>
    <text>Colocalizes with URI1 at mitochondrion.</text>
</comment>
<comment type="subcellular location">
    <molecule>Isoform Alpha I</molecule>
    <subcellularLocation>
        <location>Nucleus</location>
    </subcellularLocation>
    <subcellularLocation>
        <location>Cytoplasm</location>
    </subcellularLocation>
</comment>
<comment type="subcellular location">
    <molecule>Isoform Alpha II</molecule>
    <subcellularLocation>
        <location>Cytoplasm</location>
    </subcellularLocation>
</comment>
<comment type="alternative products">
    <event type="alternative splicing"/>
    <event type="alternative initiation"/>
    <isoform>
        <id>P23443-1</id>
        <name>Alpha I</name>
        <name>p80-S6K 1</name>
        <sequence type="displayed"/>
    </isoform>
    <isoform>
        <id>P23443-2</id>
        <name>Alpha II</name>
        <sequence type="described" ref="VSP_018839"/>
    </isoform>
    <isoform>
        <id>P23443-3</id>
        <name>2</name>
        <sequence type="described" ref="VSP_054613"/>
    </isoform>
    <isoform>
        <id>P23443-5</id>
        <name>4</name>
        <sequence type="described" ref="VSP_055026"/>
    </isoform>
    <isoform>
        <id>P23443-4</id>
        <name>3</name>
        <sequence type="described" ref="VSP_054614"/>
    </isoform>
    <text>Additional isoforms seem to exist.</text>
</comment>
<comment type="tissue specificity">
    <text evidence="38">Widely expressed.</text>
</comment>
<comment type="domain">
    <text>The autoinhibitory domain is believed to block phosphorylation within the AGC-kinase C-terminal domain and the activation loop.</text>
</comment>
<comment type="domain">
    <text evidence="1">The TOS (TOR signaling) motif is essential for activation by mTORC1.</text>
</comment>
<comment type="PTM">
    <text evidence="21 22 24 27 30 31 34 37">Phosphorylation at Thr-412 is regulated by mTORC1. The phosphorylation at this site is maintained by an agonist-dependent autophosphorylation mechanism (PubMed:18925875, PubMed:19085255, PubMed:22017876, PubMed:23429703, PubMed:29236692). Activated by phosphorylation at Thr-252 by PDPK1 (PubMed:19864428, PubMed:9445476). Dephosphorylation by PPP1CC at Thr-412 in mitochondrion (PubMed:17936702).</text>
</comment>
<comment type="similarity">
    <text evidence="43">Belongs to the protein kinase superfamily. AGC Ser/Thr protein kinase family. S6 kinase subfamily.</text>
</comment>
<gene>
    <name type="primary">RPS6KB1</name>
    <name type="synonym">STK14A</name>
</gene>
<feature type="chain" id="PRO_0000024342" description="Ribosomal protein S6 kinase beta-1">
    <location>
        <begin position="1"/>
        <end position="525"/>
    </location>
</feature>
<feature type="domain" description="Protein kinase" evidence="4">
    <location>
        <begin position="91"/>
        <end position="352"/>
    </location>
</feature>
<feature type="domain" description="AGC-kinase C-terminal" evidence="5">
    <location>
        <begin position="353"/>
        <end position="423"/>
    </location>
</feature>
<feature type="region of interest" description="Disordered" evidence="7">
    <location>
        <begin position="1"/>
        <end position="54"/>
    </location>
</feature>
<feature type="region of interest" description="Disordered" evidence="7">
    <location>
        <begin position="380"/>
        <end position="399"/>
    </location>
</feature>
<feature type="region of interest" description="Autoinhibitory domain">
    <location>
        <begin position="424"/>
        <end position="525"/>
    </location>
</feature>
<feature type="short sequence motif" description="TOS motif">
    <location>
        <begin position="28"/>
        <end position="32"/>
    </location>
</feature>
<feature type="compositionally biased region" description="Acidic residues" evidence="7">
    <location>
        <begin position="30"/>
        <end position="46"/>
    </location>
</feature>
<feature type="compositionally biased region" description="Polar residues" evidence="7">
    <location>
        <begin position="381"/>
        <end position="399"/>
    </location>
</feature>
<feature type="active site" description="Proton acceptor" evidence="4 6">
    <location>
        <position position="218"/>
    </location>
</feature>
<feature type="binding site" evidence="4">
    <location>
        <begin position="97"/>
        <end position="105"/>
    </location>
    <ligand>
        <name>ATP</name>
        <dbReference type="ChEBI" id="CHEBI:30616"/>
    </ligand>
</feature>
<feature type="binding site" evidence="4">
    <location>
        <position position="123"/>
    </location>
    <ligand>
        <name>ATP</name>
        <dbReference type="ChEBI" id="CHEBI:30616"/>
    </ligand>
</feature>
<feature type="modified residue" description="Phosphothreonine; by PDPK1" evidence="27 37">
    <location>
        <position position="252"/>
    </location>
</feature>
<feature type="modified residue" description="Phosphoserine" evidence="24">
    <location>
        <position position="394"/>
    </location>
</feature>
<feature type="modified residue" description="Phosphothreonine; by MTOR, NEK6 and NEK7" evidence="34 35">
    <location>
        <position position="412"/>
    </location>
</feature>
<feature type="modified residue" description="Phosphoserine" evidence="2">
    <location>
        <position position="434"/>
    </location>
</feature>
<feature type="modified residue" description="Phosphoserine" evidence="47">
    <location>
        <position position="441"/>
    </location>
</feature>
<feature type="modified residue" description="Phosphothreonine" evidence="24 47 48">
    <location>
        <position position="444"/>
    </location>
</feature>
<feature type="modified residue" description="Phosphoserine" evidence="24 46 47 48">
    <location>
        <position position="447"/>
    </location>
</feature>
<feature type="modified residue" description="Phosphoserine" evidence="47">
    <location>
        <position position="452"/>
    </location>
</feature>
<feature type="modified residue" description="N6-acetyllysine" evidence="2">
    <location>
        <position position="516"/>
    </location>
</feature>
<feature type="splice variant" id="VSP_054613" description="In isoform 2." evidence="39">
    <location>
        <begin position="1"/>
        <end position="53"/>
    </location>
</feature>
<feature type="splice variant" id="VSP_018839" description="In isoform Alpha II." evidence="41">
    <location>
        <begin position="1"/>
        <end position="23"/>
    </location>
</feature>
<feature type="splice variant" id="VSP_055026" description="In isoform 4." evidence="39">
    <location>
        <begin position="104"/>
        <end position="126"/>
    </location>
</feature>
<feature type="splice variant" id="VSP_054614" description="In isoform 3." evidence="40">
    <original>PVKFSPGDFWGRGASASTANPQTPVEYPMETSGIEQMDVTMSGEASAPLPIRQPNSGPYKKQAFPMISKRPEHLRMNL</original>
    <variation>TAMC</variation>
    <location>
        <begin position="448"/>
        <end position="525"/>
    </location>
</feature>
<feature type="sequence variant" id="VAR_040639" evidence="19">
    <original>M</original>
    <variation>I</variation>
    <location>
        <position position="225"/>
    </location>
</feature>
<feature type="sequence variant" id="VAR_040640" description="In dbSNP:rs766645749." evidence="19">
    <original>R</original>
    <variation>C</variation>
    <location>
        <position position="272"/>
    </location>
</feature>
<feature type="sequence variant" id="VAR_040641" evidence="19">
    <original>W</original>
    <variation>C</variation>
    <location>
        <position position="276"/>
    </location>
</feature>
<feature type="sequence variant" id="VAR_035628" description="In a colorectal cancer sample; somatic mutation." evidence="16">
    <original>G</original>
    <variation>E</variation>
    <location>
        <position position="289"/>
    </location>
</feature>
<feature type="sequence variant" id="VAR_040642" evidence="19">
    <original>S</original>
    <variation>A</variation>
    <location>
        <position position="398"/>
    </location>
</feature>
<feature type="mutagenesis site" description="Greatly reduces activity. Greatly reduces phosphorylation at T-412 and moderately reduces phosphorylation at T-252." evidence="20">
    <original>K</original>
    <variation>N</variation>
    <location>
        <position position="167"/>
    </location>
</feature>
<feature type="mutagenesis site" description="Loss of activity. Loss of phosphorylation at T-412." evidence="20">
    <original>S</original>
    <variation>A</variation>
    <location>
        <position position="394"/>
    </location>
</feature>
<feature type="mutagenesis site" description="Mimics phosphorylation. Facilitates phosphorylation of T-252 by PDPK1; when associated with E-434; E-441; E-444 and E-447. Mimics phosphorylation. No effect on interaction with PDPK1 and phosphorylation of T-252. Impairs association with the eIF3 complex." evidence="15 25 37">
    <original>T</original>
    <variation>E</variation>
    <location>
        <position position="412"/>
    </location>
</feature>
<feature type="mutagenesis site" description="Facilitates phosphorylation of T-252 by PDPK1; when associated with E-412; E-441; E-444 and E-447." evidence="37">
    <original>S</original>
    <variation>E</variation>
    <location>
        <position position="434"/>
    </location>
</feature>
<feature type="mutagenesis site" description="Facilitates phosphorylation of T-252 by PDPK1; when associated with E-412; E-434; E-444 and E-447." evidence="37">
    <original>S</original>
    <variation>E</variation>
    <location>
        <position position="441"/>
    </location>
</feature>
<feature type="mutagenesis site" description="Facilitates phosphorylation of T-252 by PDPK1; when associated with E-412; E-434; E-441 and E-447." evidence="37">
    <original>T</original>
    <variation>E</variation>
    <location>
        <position position="444"/>
    </location>
</feature>
<feature type="mutagenesis site" description="Facilitates phosphorylation of T-252 by PDPK1; when associated with E-412; E-434; E-441 and E-444." evidence="37">
    <original>S</original>
    <variation>E</variation>
    <location>
        <position position="447"/>
    </location>
</feature>
<feature type="sequence conflict" description="In Ref. 2; BAG61973." evidence="43" ref="2">
    <original>E</original>
    <variation>V</variation>
    <location>
        <position position="222"/>
    </location>
</feature>
<feature type="sequence conflict" description="In Ref. 2; BAG35726." evidence="43" ref="2">
    <original>F</original>
    <variation>L</variation>
    <location>
        <position position="428"/>
    </location>
</feature>
<feature type="helix" evidence="50">
    <location>
        <begin position="88"/>
        <end position="90"/>
    </location>
</feature>
<feature type="strand" evidence="50">
    <location>
        <begin position="91"/>
        <end position="99"/>
    </location>
</feature>
<feature type="strand" evidence="50">
    <location>
        <begin position="101"/>
        <end position="110"/>
    </location>
</feature>
<feature type="turn" evidence="50">
    <location>
        <begin position="114"/>
        <end position="117"/>
    </location>
</feature>
<feature type="strand" evidence="50">
    <location>
        <begin position="119"/>
        <end position="126"/>
    </location>
</feature>
<feature type="helix" evidence="50">
    <location>
        <begin position="127"/>
        <end position="132"/>
    </location>
</feature>
<feature type="helix" evidence="50">
    <location>
        <begin position="137"/>
        <end position="149"/>
    </location>
</feature>
<feature type="strand" evidence="50">
    <location>
        <begin position="158"/>
        <end position="164"/>
    </location>
</feature>
<feature type="strand" evidence="50">
    <location>
        <begin position="167"/>
        <end position="173"/>
    </location>
</feature>
<feature type="helix" evidence="50">
    <location>
        <begin position="180"/>
        <end position="187"/>
    </location>
</feature>
<feature type="helix" evidence="50">
    <location>
        <begin position="192"/>
        <end position="212"/>
    </location>
</feature>
<feature type="helix" evidence="50">
    <location>
        <begin position="221"/>
        <end position="223"/>
    </location>
</feature>
<feature type="strand" evidence="50">
    <location>
        <begin position="224"/>
        <end position="226"/>
    </location>
</feature>
<feature type="strand" evidence="50">
    <location>
        <begin position="232"/>
        <end position="234"/>
    </location>
</feature>
<feature type="strand" evidence="51">
    <location>
        <begin position="246"/>
        <end position="249"/>
    </location>
</feature>
<feature type="strand" evidence="50">
    <location>
        <begin position="252"/>
        <end position="255"/>
    </location>
</feature>
<feature type="helix" evidence="50">
    <location>
        <begin position="262"/>
        <end position="265"/>
    </location>
</feature>
<feature type="turn" evidence="55">
    <location>
        <begin position="266"/>
        <end position="269"/>
    </location>
</feature>
<feature type="helix" evidence="50">
    <location>
        <begin position="273"/>
        <end position="288"/>
    </location>
</feature>
<feature type="helix" evidence="50">
    <location>
        <begin position="298"/>
        <end position="307"/>
    </location>
</feature>
<feature type="strand" evidence="49">
    <location>
        <begin position="314"/>
        <end position="316"/>
    </location>
</feature>
<feature type="helix" evidence="50">
    <location>
        <begin position="318"/>
        <end position="327"/>
    </location>
</feature>
<feature type="helix" evidence="50">
    <location>
        <begin position="332"/>
        <end position="334"/>
    </location>
</feature>
<feature type="turn" evidence="50">
    <location>
        <begin position="340"/>
        <end position="342"/>
    </location>
</feature>
<feature type="helix" evidence="50">
    <location>
        <begin position="343"/>
        <end position="347"/>
    </location>
</feature>
<feature type="helix" evidence="50">
    <location>
        <begin position="350"/>
        <end position="352"/>
    </location>
</feature>
<feature type="helix" evidence="50">
    <location>
        <begin position="357"/>
        <end position="361"/>
    </location>
</feature>
<feature type="turn" evidence="50">
    <location>
        <begin position="371"/>
        <end position="373"/>
    </location>
</feature>
<feature type="strand" evidence="53">
    <location>
        <begin position="374"/>
        <end position="377"/>
    </location>
</feature>
<feature type="turn" evidence="54">
    <location>
        <begin position="380"/>
        <end position="382"/>
    </location>
</feature>
<feature type="helix" evidence="57">
    <location>
        <begin position="384"/>
        <end position="387"/>
    </location>
</feature>
<feature type="helix" evidence="52">
    <location>
        <begin position="409"/>
        <end position="411"/>
    </location>
</feature>
<feature type="strand" evidence="52">
    <location>
        <begin position="413"/>
        <end position="415"/>
    </location>
</feature>
<feature type="helix" evidence="56">
    <location>
        <begin position="418"/>
        <end position="421"/>
    </location>
</feature>
<feature type="helix" evidence="56">
    <location>
        <begin position="423"/>
        <end position="426"/>
    </location>
</feature>
<feature type="helix" evidence="56">
    <location>
        <begin position="429"/>
        <end position="431"/>
    </location>
</feature>
<dbReference type="EC" id="2.7.11.1" evidence="14 21 23 24 33"/>
<dbReference type="EMBL" id="M60724">
    <property type="protein sequence ID" value="AAA36410.1"/>
    <property type="molecule type" value="mRNA"/>
</dbReference>
<dbReference type="EMBL" id="M60725">
    <property type="protein sequence ID" value="AAA36411.1"/>
    <property type="molecule type" value="mRNA"/>
</dbReference>
<dbReference type="EMBL" id="AK297147">
    <property type="protein sequence ID" value="BAG59646.1"/>
    <property type="molecule type" value="mRNA"/>
</dbReference>
<dbReference type="EMBL" id="AK300202">
    <property type="protein sequence ID" value="BAG61973.1"/>
    <property type="molecule type" value="mRNA"/>
</dbReference>
<dbReference type="EMBL" id="AK312875">
    <property type="protein sequence ID" value="BAG35726.1"/>
    <property type="molecule type" value="mRNA"/>
</dbReference>
<dbReference type="EMBL" id="AC004686">
    <property type="status" value="NOT_ANNOTATED_CDS"/>
    <property type="molecule type" value="Genomic_DNA"/>
</dbReference>
<dbReference type="EMBL" id="CH471109">
    <property type="protein sequence ID" value="EAW94384.1"/>
    <property type="molecule type" value="Genomic_DNA"/>
</dbReference>
<dbReference type="EMBL" id="BC053365">
    <property type="protein sequence ID" value="AAH53365.1"/>
    <property type="molecule type" value="mRNA"/>
</dbReference>
<dbReference type="CCDS" id="CCDS11621.1">
    <molecule id="P23443-1"/>
</dbReference>
<dbReference type="CCDS" id="CCDS62271.1">
    <molecule id="P23443-4"/>
</dbReference>
<dbReference type="CCDS" id="CCDS62272.1">
    <molecule id="P23443-5"/>
</dbReference>
<dbReference type="CCDS" id="CCDS62273.1">
    <molecule id="P23443-3"/>
</dbReference>
<dbReference type="PIR" id="A41687">
    <property type="entry name" value="A41687"/>
</dbReference>
<dbReference type="RefSeq" id="NP_001258971.1">
    <molecule id="P23443-5"/>
    <property type="nucleotide sequence ID" value="NM_001272042.2"/>
</dbReference>
<dbReference type="RefSeq" id="NP_001258972.1">
    <molecule id="P23443-4"/>
    <property type="nucleotide sequence ID" value="NM_001272043.2"/>
</dbReference>
<dbReference type="RefSeq" id="NP_001258973.1">
    <molecule id="P23443-3"/>
    <property type="nucleotide sequence ID" value="NM_001272044.2"/>
</dbReference>
<dbReference type="RefSeq" id="NP_001258989.1">
    <molecule id="P23443-2"/>
    <property type="nucleotide sequence ID" value="NM_001272060.2"/>
</dbReference>
<dbReference type="RefSeq" id="NP_003152.1">
    <molecule id="P23443-1"/>
    <property type="nucleotide sequence ID" value="NM_003161.4"/>
</dbReference>
<dbReference type="PDB" id="3A60">
    <property type="method" value="X-ray"/>
    <property type="resolution" value="2.80 A"/>
    <property type="chains" value="A/B=75-399"/>
</dbReference>
<dbReference type="PDB" id="3A61">
    <property type="method" value="X-ray"/>
    <property type="resolution" value="3.43 A"/>
    <property type="chains" value="A=75-399"/>
</dbReference>
<dbReference type="PDB" id="3A62">
    <property type="method" value="X-ray"/>
    <property type="resolution" value="2.35 A"/>
    <property type="chains" value="A=75-399"/>
</dbReference>
<dbReference type="PDB" id="3WE4">
    <property type="method" value="X-ray"/>
    <property type="resolution" value="2.00 A"/>
    <property type="chains" value="A=78-399"/>
</dbReference>
<dbReference type="PDB" id="3WF5">
    <property type="method" value="X-ray"/>
    <property type="resolution" value="2.10 A"/>
    <property type="chains" value="A=78-399"/>
</dbReference>
<dbReference type="PDB" id="3WF6">
    <property type="method" value="X-ray"/>
    <property type="resolution" value="2.03 A"/>
    <property type="chains" value="A=78-399"/>
</dbReference>
<dbReference type="PDB" id="3WF7">
    <property type="method" value="X-ray"/>
    <property type="resolution" value="1.85 A"/>
    <property type="chains" value="A=78-399"/>
</dbReference>
<dbReference type="PDB" id="3WF8">
    <property type="method" value="X-ray"/>
    <property type="resolution" value="1.98 A"/>
    <property type="chains" value="A=78-399"/>
</dbReference>
<dbReference type="PDB" id="3WF9">
    <property type="method" value="X-ray"/>
    <property type="resolution" value="2.04 A"/>
    <property type="chains" value="A=78-399"/>
</dbReference>
<dbReference type="PDB" id="4L3J">
    <property type="method" value="X-ray"/>
    <property type="resolution" value="2.10 A"/>
    <property type="chains" value="A=75-375"/>
</dbReference>
<dbReference type="PDB" id="4L3L">
    <property type="method" value="X-ray"/>
    <property type="resolution" value="2.10 A"/>
    <property type="chains" value="A=75-375"/>
</dbReference>
<dbReference type="PDB" id="4L42">
    <property type="method" value="X-ray"/>
    <property type="resolution" value="2.80 A"/>
    <property type="chains" value="A=75-417"/>
</dbReference>
<dbReference type="PDB" id="4L43">
    <property type="method" value="X-ray"/>
    <property type="resolution" value="3.00 A"/>
    <property type="chains" value="A=75-417"/>
</dbReference>
<dbReference type="PDB" id="4L44">
    <property type="method" value="X-ray"/>
    <property type="resolution" value="2.90 A"/>
    <property type="chains" value="A=75-417"/>
</dbReference>
<dbReference type="PDB" id="4L45">
    <property type="method" value="X-ray"/>
    <property type="resolution" value="2.90 A"/>
    <property type="chains" value="A=75-417"/>
</dbReference>
<dbReference type="PDB" id="4L46">
    <property type="method" value="X-ray"/>
    <property type="resolution" value="3.01 A"/>
    <property type="chains" value="A=75-417"/>
</dbReference>
<dbReference type="PDB" id="4RLO">
    <property type="method" value="X-ray"/>
    <property type="resolution" value="2.53 A"/>
    <property type="chains" value="A/B=85-372"/>
</dbReference>
<dbReference type="PDB" id="4RLP">
    <property type="method" value="X-ray"/>
    <property type="resolution" value="2.79 A"/>
    <property type="chains" value="A=85-372"/>
</dbReference>
<dbReference type="PDB" id="5WBH">
    <property type="method" value="X-ray"/>
    <property type="resolution" value="1.75 A"/>
    <property type="chains" value="W=412-437"/>
</dbReference>
<dbReference type="PDB" id="5WBK">
    <property type="method" value="X-ray"/>
    <property type="resolution" value="3.11 A"/>
    <property type="chains" value="T=24-37"/>
</dbReference>
<dbReference type="PDB" id="7N91">
    <property type="method" value="X-ray"/>
    <property type="resolution" value="3.00 A"/>
    <property type="chains" value="A/B=82-421"/>
</dbReference>
<dbReference type="PDB" id="7N93">
    <property type="method" value="X-ray"/>
    <property type="resolution" value="2.74 A"/>
    <property type="chains" value="A/B=82-421"/>
</dbReference>
<dbReference type="PDBsum" id="3A60"/>
<dbReference type="PDBsum" id="3A61"/>
<dbReference type="PDBsum" id="3A62"/>
<dbReference type="PDBsum" id="3WE4"/>
<dbReference type="PDBsum" id="3WF5"/>
<dbReference type="PDBsum" id="3WF6"/>
<dbReference type="PDBsum" id="3WF7"/>
<dbReference type="PDBsum" id="3WF8"/>
<dbReference type="PDBsum" id="3WF9"/>
<dbReference type="PDBsum" id="4L3J"/>
<dbReference type="PDBsum" id="4L3L"/>
<dbReference type="PDBsum" id="4L42"/>
<dbReference type="PDBsum" id="4L43"/>
<dbReference type="PDBsum" id="4L44"/>
<dbReference type="PDBsum" id="4L45"/>
<dbReference type="PDBsum" id="4L46"/>
<dbReference type="PDBsum" id="4RLO"/>
<dbReference type="PDBsum" id="4RLP"/>
<dbReference type="PDBsum" id="5WBH"/>
<dbReference type="PDBsum" id="5WBK"/>
<dbReference type="PDBsum" id="7N91"/>
<dbReference type="PDBsum" id="7N93"/>
<dbReference type="SMR" id="P23443"/>
<dbReference type="BioGRID" id="112112">
    <property type="interactions" value="138"/>
</dbReference>
<dbReference type="DIP" id="DIP-29986N"/>
<dbReference type="ELM" id="P23443"/>
<dbReference type="FunCoup" id="P23443">
    <property type="interactions" value="5200"/>
</dbReference>
<dbReference type="IntAct" id="P23443">
    <property type="interactions" value="38"/>
</dbReference>
<dbReference type="MINT" id="P23443"/>
<dbReference type="STRING" id="9606.ENSP00000225577"/>
<dbReference type="BindingDB" id="P23443"/>
<dbReference type="ChEMBL" id="CHEMBL4501"/>
<dbReference type="DrugBank" id="DB12429">
    <property type="generic name" value="CI-1040"/>
</dbReference>
<dbReference type="DrugBank" id="DB15431">
    <property type="generic name" value="M-2698"/>
</dbReference>
<dbReference type="DrugBank" id="DB04462">
    <property type="generic name" value="Tetrabromo-2-Benzotriazole"/>
</dbReference>
<dbReference type="DrugCentral" id="P23443"/>
<dbReference type="GuidetoPHARMACOLOGY" id="1525"/>
<dbReference type="GlyGen" id="P23443">
    <property type="glycosylation" value="2 sites, 1 O-linked glycan (2 sites)"/>
</dbReference>
<dbReference type="iPTMnet" id="P23443"/>
<dbReference type="PhosphoSitePlus" id="P23443"/>
<dbReference type="BioMuta" id="RPS6KB1"/>
<dbReference type="DMDM" id="54041234"/>
<dbReference type="CPTAC" id="CPTAC-3183"/>
<dbReference type="CPTAC" id="CPTAC-3184"/>
<dbReference type="jPOST" id="P23443"/>
<dbReference type="MassIVE" id="P23443"/>
<dbReference type="PaxDb" id="9606-ENSP00000225577"/>
<dbReference type="PeptideAtlas" id="P23443"/>
<dbReference type="ProteomicsDB" id="28050"/>
<dbReference type="ProteomicsDB" id="4559"/>
<dbReference type="ProteomicsDB" id="54095">
    <molecule id="P23443-1"/>
</dbReference>
<dbReference type="ProteomicsDB" id="54096">
    <molecule id="P23443-2"/>
</dbReference>
<dbReference type="ProteomicsDB" id="69478"/>
<dbReference type="Pumba" id="P23443"/>
<dbReference type="Antibodypedia" id="3544">
    <property type="antibodies" value="2687 antibodies from 53 providers"/>
</dbReference>
<dbReference type="DNASU" id="6198"/>
<dbReference type="Ensembl" id="ENST00000225577.9">
    <molecule id="P23443-1"/>
    <property type="protein sequence ID" value="ENSP00000225577.4"/>
    <property type="gene ID" value="ENSG00000108443.14"/>
</dbReference>
<dbReference type="Ensembl" id="ENST00000393021.7">
    <molecule id="P23443-3"/>
    <property type="protein sequence ID" value="ENSP00000376744.3"/>
    <property type="gene ID" value="ENSG00000108443.14"/>
</dbReference>
<dbReference type="Ensembl" id="ENST00000406116.7">
    <molecule id="P23443-4"/>
    <property type="protein sequence ID" value="ENSP00000384335.3"/>
    <property type="gene ID" value="ENSG00000108443.14"/>
</dbReference>
<dbReference type="Ensembl" id="ENST00000443572.6">
    <molecule id="P23443-5"/>
    <property type="protein sequence ID" value="ENSP00000441993.1"/>
    <property type="gene ID" value="ENSG00000108443.14"/>
</dbReference>
<dbReference type="GeneID" id="6198"/>
<dbReference type="KEGG" id="hsa:6198"/>
<dbReference type="MANE-Select" id="ENST00000225577.9">
    <property type="protein sequence ID" value="ENSP00000225577.4"/>
    <property type="RefSeq nucleotide sequence ID" value="NM_003161.4"/>
    <property type="RefSeq protein sequence ID" value="NP_003152.1"/>
</dbReference>
<dbReference type="UCSC" id="uc002ixy.5">
    <molecule id="P23443-1"/>
    <property type="organism name" value="human"/>
</dbReference>
<dbReference type="AGR" id="HGNC:10436"/>
<dbReference type="CTD" id="6198"/>
<dbReference type="DisGeNET" id="6198"/>
<dbReference type="GeneCards" id="RPS6KB1"/>
<dbReference type="HGNC" id="HGNC:10436">
    <property type="gene designation" value="RPS6KB1"/>
</dbReference>
<dbReference type="HPA" id="ENSG00000108443">
    <property type="expression patterns" value="Low tissue specificity"/>
</dbReference>
<dbReference type="MIM" id="608938">
    <property type="type" value="gene"/>
</dbReference>
<dbReference type="neXtProt" id="NX_P23443"/>
<dbReference type="OpenTargets" id="ENSG00000108443"/>
<dbReference type="PharmGKB" id="PA34851"/>
<dbReference type="VEuPathDB" id="HostDB:ENSG00000108443"/>
<dbReference type="eggNOG" id="KOG0598">
    <property type="taxonomic scope" value="Eukaryota"/>
</dbReference>
<dbReference type="GeneTree" id="ENSGT00940000154203"/>
<dbReference type="HOGENOM" id="CLU_000288_63_5_1"/>
<dbReference type="InParanoid" id="P23443"/>
<dbReference type="OMA" id="KGSIFAM"/>
<dbReference type="OrthoDB" id="63267at2759"/>
<dbReference type="PAN-GO" id="P23443">
    <property type="GO annotations" value="6 GO annotations based on evolutionary models"/>
</dbReference>
<dbReference type="PhylomeDB" id="P23443"/>
<dbReference type="TreeFam" id="TF313438"/>
<dbReference type="BRENDA" id="2.7.11.1">
    <property type="organism ID" value="2681"/>
</dbReference>
<dbReference type="PathwayCommons" id="P23443"/>
<dbReference type="Reactome" id="R-HSA-166208">
    <property type="pathway name" value="mTORC1-mediated signalling"/>
</dbReference>
<dbReference type="SABIO-RK" id="P23443"/>
<dbReference type="SignaLink" id="P23443"/>
<dbReference type="SIGNOR" id="P23443"/>
<dbReference type="BioGRID-ORCS" id="6198">
    <property type="hits" value="48 hits in 1195 CRISPR screens"/>
</dbReference>
<dbReference type="ChiTaRS" id="RPS6KB1">
    <property type="organism name" value="human"/>
</dbReference>
<dbReference type="EvolutionaryTrace" id="P23443"/>
<dbReference type="GeneWiki" id="P70-S6_Kinase_1"/>
<dbReference type="GenomeRNAi" id="6198"/>
<dbReference type="Pharos" id="P23443">
    <property type="development level" value="Tchem"/>
</dbReference>
<dbReference type="PRO" id="PR:P23443"/>
<dbReference type="Proteomes" id="UP000005640">
    <property type="component" value="Chromosome 17"/>
</dbReference>
<dbReference type="RNAct" id="P23443">
    <property type="molecule type" value="protein"/>
</dbReference>
<dbReference type="Bgee" id="ENSG00000108443">
    <property type="expression patterns" value="Expressed in endothelial cell and 191 other cell types or tissues"/>
</dbReference>
<dbReference type="ExpressionAtlas" id="P23443">
    <property type="expression patterns" value="baseline and differential"/>
</dbReference>
<dbReference type="GO" id="GO:0005737">
    <property type="term" value="C:cytoplasm"/>
    <property type="evidence" value="ECO:0000314"/>
    <property type="project" value="UniProtKB"/>
</dbReference>
<dbReference type="GO" id="GO:0005829">
    <property type="term" value="C:cytosol"/>
    <property type="evidence" value="ECO:0000304"/>
    <property type="project" value="Reactome"/>
</dbReference>
<dbReference type="GO" id="GO:0098978">
    <property type="term" value="C:glutamatergic synapse"/>
    <property type="evidence" value="ECO:0007669"/>
    <property type="project" value="Ensembl"/>
</dbReference>
<dbReference type="GO" id="GO:0005741">
    <property type="term" value="C:mitochondrial outer membrane"/>
    <property type="evidence" value="ECO:0007669"/>
    <property type="project" value="UniProtKB-SubCell"/>
</dbReference>
<dbReference type="GO" id="GO:0005739">
    <property type="term" value="C:mitochondrion"/>
    <property type="evidence" value="ECO:0000314"/>
    <property type="project" value="UniProtKB"/>
</dbReference>
<dbReference type="GO" id="GO:0043005">
    <property type="term" value="C:neuron projection"/>
    <property type="evidence" value="ECO:0007669"/>
    <property type="project" value="UniProtKB-KW"/>
</dbReference>
<dbReference type="GO" id="GO:0005654">
    <property type="term" value="C:nucleoplasm"/>
    <property type="evidence" value="ECO:0000314"/>
    <property type="project" value="HPA"/>
</dbReference>
<dbReference type="GO" id="GO:0005634">
    <property type="term" value="C:nucleus"/>
    <property type="evidence" value="ECO:0000314"/>
    <property type="project" value="UniProtKB"/>
</dbReference>
<dbReference type="GO" id="GO:0005524">
    <property type="term" value="F:ATP binding"/>
    <property type="evidence" value="ECO:0007669"/>
    <property type="project" value="UniProtKB-KW"/>
</dbReference>
<dbReference type="GO" id="GO:0004672">
    <property type="term" value="F:protein kinase activity"/>
    <property type="evidence" value="ECO:0000314"/>
    <property type="project" value="UniProtKB"/>
</dbReference>
<dbReference type="GO" id="GO:0106310">
    <property type="term" value="F:protein serine kinase activity"/>
    <property type="evidence" value="ECO:0007669"/>
    <property type="project" value="RHEA"/>
</dbReference>
<dbReference type="GO" id="GO:0004674">
    <property type="term" value="F:protein serine/threonine kinase activity"/>
    <property type="evidence" value="ECO:0000314"/>
    <property type="project" value="UniProtKB"/>
</dbReference>
<dbReference type="GO" id="GO:0004712">
    <property type="term" value="F:protein serine/threonine/tyrosine kinase activity"/>
    <property type="evidence" value="ECO:0000314"/>
    <property type="project" value="MGI"/>
</dbReference>
<dbReference type="GO" id="GO:0006915">
    <property type="term" value="P:apoptotic process"/>
    <property type="evidence" value="ECO:0007669"/>
    <property type="project" value="UniProtKB-KW"/>
</dbReference>
<dbReference type="GO" id="GO:0001662">
    <property type="term" value="P:behavioral fear response"/>
    <property type="evidence" value="ECO:0007669"/>
    <property type="project" value="Ensembl"/>
</dbReference>
<dbReference type="GO" id="GO:0071549">
    <property type="term" value="P:cellular response to dexamethasone stimulus"/>
    <property type="evidence" value="ECO:0007669"/>
    <property type="project" value="Ensembl"/>
</dbReference>
<dbReference type="GO" id="GO:0071363">
    <property type="term" value="P:cellular response to growth factor stimulus"/>
    <property type="evidence" value="ECO:0000314"/>
    <property type="project" value="UniProtKB"/>
</dbReference>
<dbReference type="GO" id="GO:0032869">
    <property type="term" value="P:cellular response to insulin stimulus"/>
    <property type="evidence" value="ECO:0000318"/>
    <property type="project" value="GO_Central"/>
</dbReference>
<dbReference type="GO" id="GO:0031670">
    <property type="term" value="P:cellular response to nutrient"/>
    <property type="evidence" value="ECO:0000314"/>
    <property type="project" value="UniProt"/>
</dbReference>
<dbReference type="GO" id="GO:0071346">
    <property type="term" value="P:cellular response to type II interferon"/>
    <property type="evidence" value="ECO:0007669"/>
    <property type="project" value="Ensembl"/>
</dbReference>
<dbReference type="GO" id="GO:0000082">
    <property type="term" value="P:G1/S transition of mitotic cell cycle"/>
    <property type="evidence" value="ECO:0000315"/>
    <property type="project" value="UniProtKB"/>
</dbReference>
<dbReference type="GO" id="GO:0007281">
    <property type="term" value="P:germ cell development"/>
    <property type="evidence" value="ECO:0007669"/>
    <property type="project" value="Ensembl"/>
</dbReference>
<dbReference type="GO" id="GO:0044539">
    <property type="term" value="P:long-chain fatty acid import into cell"/>
    <property type="evidence" value="ECO:0000250"/>
    <property type="project" value="UniProtKB"/>
</dbReference>
<dbReference type="GO" id="GO:0050804">
    <property type="term" value="P:modulation of chemical synaptic transmission"/>
    <property type="evidence" value="ECO:0007669"/>
    <property type="project" value="Ensembl"/>
</dbReference>
<dbReference type="GO" id="GO:0043066">
    <property type="term" value="P:negative regulation of apoptotic process"/>
    <property type="evidence" value="ECO:0000315"/>
    <property type="project" value="UniProtKB"/>
</dbReference>
<dbReference type="GO" id="GO:2001237">
    <property type="term" value="P:negative regulation of extrinsic apoptotic signaling pathway"/>
    <property type="evidence" value="ECO:0007669"/>
    <property type="project" value="Ensembl"/>
</dbReference>
<dbReference type="GO" id="GO:0046627">
    <property type="term" value="P:negative regulation of insulin receptor signaling pathway"/>
    <property type="evidence" value="ECO:0000314"/>
    <property type="project" value="UniProt"/>
</dbReference>
<dbReference type="GO" id="GO:1903940">
    <property type="term" value="P:negative regulation of TORC2 signaling"/>
    <property type="evidence" value="ECO:0000314"/>
    <property type="project" value="UniProtKB"/>
</dbReference>
<dbReference type="GO" id="GO:0018105">
    <property type="term" value="P:peptidyl-serine phosphorylation"/>
    <property type="evidence" value="ECO:0000315"/>
    <property type="project" value="UniProtKB"/>
</dbReference>
<dbReference type="GO" id="GO:0048015">
    <property type="term" value="P:phosphatidylinositol-mediated signaling"/>
    <property type="evidence" value="ECO:0000304"/>
    <property type="project" value="UniProtKB"/>
</dbReference>
<dbReference type="GO" id="GO:0045931">
    <property type="term" value="P:positive regulation of mitotic cell cycle"/>
    <property type="evidence" value="ECO:0000315"/>
    <property type="project" value="UniProtKB"/>
</dbReference>
<dbReference type="GO" id="GO:1904263">
    <property type="term" value="P:positive regulation of TORC1 signaling"/>
    <property type="evidence" value="ECO:0000314"/>
    <property type="project" value="UniProt"/>
</dbReference>
<dbReference type="GO" id="GO:0045727">
    <property type="term" value="P:positive regulation of translation"/>
    <property type="evidence" value="ECO:0000315"/>
    <property type="project" value="UniProtKB"/>
</dbReference>
<dbReference type="GO" id="GO:0045948">
    <property type="term" value="P:positive regulation of translational initiation"/>
    <property type="evidence" value="ECO:0000314"/>
    <property type="project" value="UniProt"/>
</dbReference>
<dbReference type="GO" id="GO:0031667">
    <property type="term" value="P:response to nutrient levels"/>
    <property type="evidence" value="ECO:0000314"/>
    <property type="project" value="UniProtKB"/>
</dbReference>
<dbReference type="GO" id="GO:0007165">
    <property type="term" value="P:signal transduction"/>
    <property type="evidence" value="ECO:0000304"/>
    <property type="project" value="ProtInc"/>
</dbReference>
<dbReference type="GO" id="GO:0031929">
    <property type="term" value="P:TOR signaling"/>
    <property type="evidence" value="ECO:0000314"/>
    <property type="project" value="UniProtKB"/>
</dbReference>
<dbReference type="GO" id="GO:0038202">
    <property type="term" value="P:TORC1 signaling"/>
    <property type="evidence" value="ECO:0000318"/>
    <property type="project" value="GO_Central"/>
</dbReference>
<dbReference type="CDD" id="cd05584">
    <property type="entry name" value="STKc_p70S6K"/>
    <property type="match status" value="1"/>
</dbReference>
<dbReference type="DisProt" id="DP01554"/>
<dbReference type="FunFam" id="3.30.200.20:FF:001128">
    <property type="entry name" value="Non-specific serine/threonine protein kinase"/>
    <property type="match status" value="1"/>
</dbReference>
<dbReference type="FunFam" id="1.10.510.10:FF:000092">
    <property type="entry name" value="Ribosomal protein S6 kinase"/>
    <property type="match status" value="1"/>
</dbReference>
<dbReference type="FunFam" id="3.30.200.20:FF:000686">
    <property type="entry name" value="Ribosomal protein S6 kinase"/>
    <property type="match status" value="1"/>
</dbReference>
<dbReference type="Gene3D" id="3.30.200.20">
    <property type="entry name" value="Phosphorylase Kinase, domain 1"/>
    <property type="match status" value="1"/>
</dbReference>
<dbReference type="Gene3D" id="1.10.510.10">
    <property type="entry name" value="Transferase(Phosphotransferase) domain 1"/>
    <property type="match status" value="1"/>
</dbReference>
<dbReference type="InterPro" id="IPR000961">
    <property type="entry name" value="AGC-kinase_C"/>
</dbReference>
<dbReference type="InterPro" id="IPR011009">
    <property type="entry name" value="Kinase-like_dom_sf"/>
</dbReference>
<dbReference type="InterPro" id="IPR017892">
    <property type="entry name" value="Pkinase_C"/>
</dbReference>
<dbReference type="InterPro" id="IPR000719">
    <property type="entry name" value="Prot_kinase_dom"/>
</dbReference>
<dbReference type="InterPro" id="IPR017441">
    <property type="entry name" value="Protein_kinase_ATP_BS"/>
</dbReference>
<dbReference type="InterPro" id="IPR016238">
    <property type="entry name" value="Ribosomal_S6_kinase"/>
</dbReference>
<dbReference type="InterPro" id="IPR008271">
    <property type="entry name" value="Ser/Thr_kinase_AS"/>
</dbReference>
<dbReference type="PANTHER" id="PTHR24351">
    <property type="entry name" value="RIBOSOMAL PROTEIN S6 KINASE"/>
    <property type="match status" value="1"/>
</dbReference>
<dbReference type="Pfam" id="PF00069">
    <property type="entry name" value="Pkinase"/>
    <property type="match status" value="1"/>
</dbReference>
<dbReference type="Pfam" id="PF00433">
    <property type="entry name" value="Pkinase_C"/>
    <property type="match status" value="1"/>
</dbReference>
<dbReference type="PIRSF" id="PIRSF000605">
    <property type="entry name" value="Ribsml_S6_kin_1"/>
    <property type="match status" value="1"/>
</dbReference>
<dbReference type="SMART" id="SM00133">
    <property type="entry name" value="S_TK_X"/>
    <property type="match status" value="1"/>
</dbReference>
<dbReference type="SMART" id="SM00220">
    <property type="entry name" value="S_TKc"/>
    <property type="match status" value="1"/>
</dbReference>
<dbReference type="SUPFAM" id="SSF56112">
    <property type="entry name" value="Protein kinase-like (PK-like)"/>
    <property type="match status" value="1"/>
</dbReference>
<dbReference type="PROSITE" id="PS51285">
    <property type="entry name" value="AGC_KINASE_CTER"/>
    <property type="match status" value="1"/>
</dbReference>
<dbReference type="PROSITE" id="PS00107">
    <property type="entry name" value="PROTEIN_KINASE_ATP"/>
    <property type="match status" value="1"/>
</dbReference>
<dbReference type="PROSITE" id="PS50011">
    <property type="entry name" value="PROTEIN_KINASE_DOM"/>
    <property type="match status" value="1"/>
</dbReference>
<dbReference type="PROSITE" id="PS00108">
    <property type="entry name" value="PROTEIN_KINASE_ST"/>
    <property type="match status" value="1"/>
</dbReference>
<proteinExistence type="evidence at protein level"/>
<name>KS6B1_HUMAN</name>
<evidence type="ECO:0000250" key="1"/>
<evidence type="ECO:0000250" key="2">
    <source>
        <dbReference type="UniProtKB" id="P67999"/>
    </source>
</evidence>
<evidence type="ECO:0000250" key="3">
    <source>
        <dbReference type="UniProtKB" id="Q8BSK8"/>
    </source>
</evidence>
<evidence type="ECO:0000255" key="4">
    <source>
        <dbReference type="PROSITE-ProRule" id="PRU00159"/>
    </source>
</evidence>
<evidence type="ECO:0000255" key="5">
    <source>
        <dbReference type="PROSITE-ProRule" id="PRU00618"/>
    </source>
</evidence>
<evidence type="ECO:0000255" key="6">
    <source>
        <dbReference type="PROSITE-ProRule" id="PRU10027"/>
    </source>
</evidence>
<evidence type="ECO:0000256" key="7">
    <source>
        <dbReference type="SAM" id="MobiDB-lite"/>
    </source>
</evidence>
<evidence type="ECO:0000269" key="8">
    <source>
    </source>
</evidence>
<evidence type="ECO:0000269" key="9">
    <source>
    </source>
</evidence>
<evidence type="ECO:0000269" key="10">
    <source>
    </source>
</evidence>
<evidence type="ECO:0000269" key="11">
    <source>
    </source>
</evidence>
<evidence type="ECO:0000269" key="12">
    <source>
    </source>
</evidence>
<evidence type="ECO:0000269" key="13">
    <source>
    </source>
</evidence>
<evidence type="ECO:0000269" key="14">
    <source>
    </source>
</evidence>
<evidence type="ECO:0000269" key="15">
    <source>
    </source>
</evidence>
<evidence type="ECO:0000269" key="16">
    <source>
    </source>
</evidence>
<evidence type="ECO:0000269" key="17">
    <source>
    </source>
</evidence>
<evidence type="ECO:0000269" key="18">
    <source>
    </source>
</evidence>
<evidence type="ECO:0000269" key="19">
    <source>
    </source>
</evidence>
<evidence type="ECO:0000269" key="20">
    <source>
    </source>
</evidence>
<evidence type="ECO:0000269" key="21">
    <source>
    </source>
</evidence>
<evidence type="ECO:0000269" key="22">
    <source>
    </source>
</evidence>
<evidence type="ECO:0000269" key="23">
    <source>
    </source>
</evidence>
<evidence type="ECO:0000269" key="24">
    <source>
    </source>
</evidence>
<evidence type="ECO:0000269" key="25">
    <source>
    </source>
</evidence>
<evidence type="ECO:0000269" key="26">
    <source>
    </source>
</evidence>
<evidence type="ECO:0000269" key="27">
    <source>
    </source>
</evidence>
<evidence type="ECO:0000269" key="28">
    <source>
    </source>
</evidence>
<evidence type="ECO:0000269" key="29">
    <source>
    </source>
</evidence>
<evidence type="ECO:0000269" key="30">
    <source>
    </source>
</evidence>
<evidence type="ECO:0000269" key="31">
    <source>
    </source>
</evidence>
<evidence type="ECO:0000269" key="32">
    <source>
    </source>
</evidence>
<evidence type="ECO:0000269" key="33">
    <source>
    </source>
</evidence>
<evidence type="ECO:0000269" key="34">
    <source>
    </source>
</evidence>
<evidence type="ECO:0000269" key="35">
    <source>
    </source>
</evidence>
<evidence type="ECO:0000269" key="36">
    <source>
    </source>
</evidence>
<evidence type="ECO:0000269" key="37">
    <source>
    </source>
</evidence>
<evidence type="ECO:0000269" key="38">
    <source>
    </source>
</evidence>
<evidence type="ECO:0000303" key="39">
    <source>
    </source>
</evidence>
<evidence type="ECO:0000303" key="40">
    <source>
    </source>
</evidence>
<evidence type="ECO:0000303" key="41">
    <source>
    </source>
</evidence>
<evidence type="ECO:0000303" key="42">
    <source>
    </source>
</evidence>
<evidence type="ECO:0000305" key="43"/>
<evidence type="ECO:0007744" key="44">
    <source>
        <dbReference type="PDB" id="5WBH"/>
    </source>
</evidence>
<evidence type="ECO:0007744" key="45">
    <source>
        <dbReference type="PDB" id="5WBK"/>
    </source>
</evidence>
<evidence type="ECO:0007744" key="46">
    <source>
    </source>
</evidence>
<evidence type="ECO:0007744" key="47">
    <source>
    </source>
</evidence>
<evidence type="ECO:0007744" key="48">
    <source>
    </source>
</evidence>
<evidence type="ECO:0007829" key="49">
    <source>
        <dbReference type="PDB" id="3A61"/>
    </source>
</evidence>
<evidence type="ECO:0007829" key="50">
    <source>
        <dbReference type="PDB" id="3WF7"/>
    </source>
</evidence>
<evidence type="ECO:0007829" key="51">
    <source>
        <dbReference type="PDB" id="3WF8"/>
    </source>
</evidence>
<evidence type="ECO:0007829" key="52">
    <source>
        <dbReference type="PDB" id="4L42"/>
    </source>
</evidence>
<evidence type="ECO:0007829" key="53">
    <source>
        <dbReference type="PDB" id="4L44"/>
    </source>
</evidence>
<evidence type="ECO:0007829" key="54">
    <source>
        <dbReference type="PDB" id="4L45"/>
    </source>
</evidence>
<evidence type="ECO:0007829" key="55">
    <source>
        <dbReference type="PDB" id="4RLO"/>
    </source>
</evidence>
<evidence type="ECO:0007829" key="56">
    <source>
        <dbReference type="PDB" id="5WBH"/>
    </source>
</evidence>
<evidence type="ECO:0007829" key="57">
    <source>
        <dbReference type="PDB" id="7N93"/>
    </source>
</evidence>
<keyword id="KW-0002">3D-structure</keyword>
<keyword id="KW-0007">Acetylation</keyword>
<keyword id="KW-0024">Alternative initiation</keyword>
<keyword id="KW-0025">Alternative splicing</keyword>
<keyword id="KW-0053">Apoptosis</keyword>
<keyword id="KW-0067">ATP-binding</keyword>
<keyword id="KW-0131">Cell cycle</keyword>
<keyword id="KW-0963">Cytoplasm</keyword>
<keyword id="KW-0418">Kinase</keyword>
<keyword id="KW-0472">Membrane</keyword>
<keyword id="KW-0496">Mitochondrion</keyword>
<keyword id="KW-1000">Mitochondrion outer membrane</keyword>
<keyword id="KW-0547">Nucleotide-binding</keyword>
<keyword id="KW-0539">Nucleus</keyword>
<keyword id="KW-0597">Phosphoprotein</keyword>
<keyword id="KW-1267">Proteomics identification</keyword>
<keyword id="KW-1185">Reference proteome</keyword>
<keyword id="KW-0723">Serine/threonine-protein kinase</keyword>
<keyword id="KW-0770">Synapse</keyword>
<keyword id="KW-0771">Synaptosome</keyword>
<keyword id="KW-0808">Transferase</keyword>
<keyword id="KW-0810">Translation regulation</keyword>